<name>DLG4_RAT</name>
<comment type="function">
    <text evidence="2 3 17 18 27 29 32 33">Postsynaptic scaffolding protein that plays a critical role in synaptogenesis and synaptic plasticity by providing a platform for the postsynaptic clustering of crucial synaptic proteins (PubMed:15317815, PubMed:15358863, PubMed:19596852, PubMed:20628354, PubMed:23300088, PubMed:26679993). Interacts with the cytoplasmic tail of NMDA receptor subunits and shaker-type potassium channels. Required for synaptic plasticity associated with NMDA receptor signaling. Overexpression or depletion of DLG4 changes the ratio of excitatory to inhibitory synapses in hippocampal neurons. May reduce the amplitude of ASIC3 acid-evoked currents by retaining the channel intracellularly. May regulate the intracellular trafficking of ADR1B (By similarity). Also regulates AMPA-type glutamate receptor (AMPAR) immobilization at postsynaptic density keeping the channels in an activated state in the presence of glutamate and preventing synaptic depression (PubMed:19596852). Under basal conditions, cooperates with FYN to stabilize palmitoyltransferase ZDHHC5 at the synaptic membrane through FYN-mediated phosphorylation of ZDHHC5 and its subsequent inhibition of association with endocytic proteins (By similarity).</text>
</comment>
<comment type="subunit">
    <text evidence="2 3 9 10 11 12 13 15 16 17 20 21 22 23 24 25 26 28 29 30 31 32 33 35 36 39 41 42 43 44 45">Interacts through its PDZ domains with ANO2 and NETO1 (By similarity). Interacts with KCNJ4 (PubMed:11997254). Interacts through its first two PDZ domains with GRIN2A, GRIN2B, GRIN2C and GRIN2D (PubMed:7569905). Interacts with ERBB4 (By similarity). Interacts with KCNA1, KCNA2, KCNA3 and KCNA4 (By similarity). Interacts with LRRC4 and LRRC4B (By similarity). Interacts with SYNGAP1 (PubMed:9581761). Interacts with ASIC3 (PubMed:15317815). Interacts with SEMA4C (PubMed:11134026). Interacts with CXADR (PubMed:15304526). Interacts with KCND2 (PubMed:11923279). Interacts (via first PDZ domain) with CRIPT (PubMed:9581762). Interacts through its first PDZ domain with GRIK2 and KCNA4 (By similarity). Interacts through its second PDZ domain with the PDZ domain of NOS1 or the C-terminus of CAPON (PubMed:23300088). Interacts through its third PDZ domain with NLGN1 and CRIPT, and probably with NLGN2 and NLGN3 (By similarity). Interacts through its guanylate kinase-like domain with DLGAP1/GKAP, DLGAP2, DLGAP3, DLGAP4, MAP1A, BEGAIN and SIPA1L1 (PubMed:11502259, PubMed:9115257, PubMed:9756850, PubMed:9786987). Interacts through its guanylate kinase-like domain with KIF13B (By similarity). Isoform 2 interacts through an L27 domain with HGS/HRS and the first L27 domain of CASK (By similarity). Interacts with ANKS1B (PubMed:17334360). Interacts with ADR1B (By similarity). May interact with HTR2A (By similarity). Interacts with ADAM22, KLHL17 and LGI1 (PubMed:16054660, PubMed:16990550, PubMed:20089912). Interacts with FRMPD4 (via C-terminus) (PubMed:19118189). Interacts with LRFN1 and LRFN2 (PubMed:16495444, PubMed:16630835). Interacts with LRFN4 (By similarity). Interacts (via N-terminal tandem pair of PDZ domains) with GPER1 (via C-terminus tail motif); the interaction is direct and induces the increase of GPER1 protein levels residing at the plasma membrane surface in a estradiol-independent manner (PubMed:23300088). Interacts (via N-terminus tandem pair of PDZ domains) with NOS1 (via N-terminal domain) (PubMed:23300088). Interacts with SHANK3 (By similarity). Interacts with GPR85 (By similarity). Interacts with CACNG2 and MPP2 (via the SH3-Guanylate kinase-like sub-module) (PubMed:27756895). Interacts with ADGRB1 (By similarity). Found in a complex with PRR7 and GRIN1 (PubMed:27458189). Interacts (via PDZ3 domain and to lesser degree via PDZ2 domain) with PRR7 (PubMed:15629447, PubMed:27458189). Component of the postsynaptic hippocampal AMPA-type glutamate receptor (AMPAR) complex, at least composed of pore forming AMPAR subunits GRIA1, GRIA2 and GRIA3 and AMPAR auxiliary proteins SHISA6 and SHISA7. Interacts (via its first two PDZ domains) with SHISA6 and SHISA7 (via PDZ-binding motif); the interaction is direct (By similarity). Interacts (via PDZ domain 2) with SEMA4F (via PDZ-binding motif); this interaction may promote translocation of DLG4/SAP90 to the membrane (PubMed:11483650). Interacts with RPH3A and GRIN2A; this ternary complex regulates NMDA receptor composition at postsynaptic membranes (PubMed:26679993). Interacts with ABR and BCR (PubMed:20962234). Interacts with DGKI (via PDZ-binding motif); controls the localization of DGKI to the synapse (PubMed:21119615). Interacts with C9orf72, SMCR8 and RAB39B (By similarity). Interacts with ZDHHC5 (By similarity). Interacts with PTEN (via PDZ domain-binding motif); the interaction is induced by NMDA and is required for PTEN location at postsynaptic density (PubMed:20628354). Found in a complex with GRIA1, GRIA2, GRIA3, GRIA4, CACNG8 and CNIH2 (By similarity). Interacts with FAM81A; the interaction facilitates condensate formation via liquid-liquid phase separation (By similarity). Interacts with ADGRL3 (By similarity). Interacts with SORCS3 (By similarity).</text>
</comment>
<comment type="interaction">
    <interactant intactId="EBI-375655">
        <id>P31016</id>
    </interactant>
    <interactant intactId="EBI-7090342">
        <id>P10608</id>
        <label>Adrb2</label>
    </interactant>
    <organismsDiffer>false</organismsDiffer>
    <experiments>2</experiments>
</comment>
<comment type="interaction">
    <interactant intactId="EBI-375655">
        <id>P31016</id>
    </interactant>
    <interactant intactId="EBI-631663">
        <id>P70478</id>
        <label>Apc</label>
    </interactant>
    <organismsDiffer>false</organismsDiffer>
    <experiments>2</experiments>
</comment>
<comment type="interaction">
    <interactant intactId="EBI-375655">
        <id>P31016</id>
    </interactant>
    <interactant intactId="EBI-8538384">
        <id>Q71RJ2</id>
        <label>Cacng2</label>
    </interactant>
    <organismsDiffer>false</organismsDiffer>
    <experiments>2</experiments>
</comment>
<comment type="interaction">
    <interactant intactId="EBI-375655">
        <id>P31016</id>
    </interactant>
    <interactant intactId="EBI-8548356">
        <id>Q9Z1T4</id>
        <label>Cnksr2</label>
    </interactant>
    <organismsDiffer>false</organismsDiffer>
    <experiments>4</experiments>
</comment>
<comment type="interaction">
    <interactant intactId="EBI-375655">
        <id>P31016</id>
    </interactant>
    <interactant intactId="EBI-8523614">
        <id>F1MAB7</id>
        <label>Dgki</label>
    </interactant>
    <organismsDiffer>false</organismsDiffer>
    <experiments>4</experiments>
</comment>
<comment type="interaction">
    <interactant intactId="EBI-375655">
        <id>P31016</id>
    </interactant>
    <interactant intactId="EBI-8570505">
        <id>O08560</id>
        <label>Dgkz</label>
    </interactant>
    <organismsDiffer>false</organismsDiffer>
    <experiments>6</experiments>
</comment>
<comment type="interaction">
    <interactant intactId="EBI-375655">
        <id>P31016</id>
    </interactant>
    <interactant intactId="EBI-389325">
        <id>Q62696</id>
        <label>Dlg1</label>
    </interactant>
    <organismsDiffer>false</organismsDiffer>
    <experiments>3</experiments>
</comment>
<comment type="interaction">
    <interactant intactId="EBI-375655">
        <id>P31016</id>
    </interactant>
    <interactant intactId="EBI-80901">
        <id>P97836</id>
        <label>Dlgap1</label>
    </interactant>
    <organismsDiffer>false</organismsDiffer>
    <experiments>9</experiments>
</comment>
<comment type="interaction">
    <interactant intactId="EBI-375655">
        <id>P31016</id>
    </interactant>
    <interactant intactId="EBI-81025">
        <id>P97837</id>
        <label>Dlgap2</label>
    </interactant>
    <organismsDiffer>false</organismsDiffer>
    <experiments>2</experiments>
</comment>
<comment type="interaction">
    <interactant intactId="EBI-375655">
        <id>P31016</id>
    </interactant>
    <interactant intactId="EBI-371642">
        <id>P19490</id>
        <label>Gria1</label>
    </interactant>
    <organismsDiffer>false</organismsDiffer>
    <experiments>5</experiments>
</comment>
<comment type="interaction">
    <interactant intactId="EBI-375655">
        <id>P31016</id>
    </interactant>
    <interactant intactId="EBI-877897">
        <id>P35439</id>
        <label>Grin1</label>
    </interactant>
    <organismsDiffer>false</organismsDiffer>
    <experiments>4</experiments>
</comment>
<comment type="interaction">
    <interactant intactId="EBI-375655">
        <id>P31016</id>
    </interactant>
    <interactant intactId="EBI-630970">
        <id>Q00959</id>
        <label>Grin2a</label>
    </interactant>
    <organismsDiffer>false</organismsDiffer>
    <experiments>5</experiments>
</comment>
<comment type="interaction">
    <interactant intactId="EBI-375655">
        <id>P31016</id>
    </interactant>
    <interactant intactId="EBI-396905">
        <id>Q00960</id>
        <label>Grin2b</label>
    </interactant>
    <organismsDiffer>false</organismsDiffer>
    <experiments>8</experiments>
</comment>
<comment type="interaction">
    <interactant intactId="EBI-375655">
        <id>P31016</id>
    </interactant>
    <interactant intactId="EBI-7665590">
        <id>Q9WVI4</id>
        <label>Gucy1a2</label>
    </interactant>
    <organismsDiffer>false</organismsDiffer>
    <experiments>7</experiments>
</comment>
<comment type="interaction">
    <interactant intactId="EBI-375655">
        <id>P31016</id>
    </interactant>
    <interactant intactId="EBI-7980539">
        <id>P20595</id>
        <label>Gucy1b1</label>
    </interactant>
    <organismsDiffer>false</organismsDiffer>
    <experiments>2</experiments>
</comment>
<comment type="interaction">
    <interactant intactId="EBI-375655">
        <id>P31016</id>
    </interactant>
    <interactant intactId="EBI-15348306">
        <id>Q5XIE8</id>
        <label>Itm2b</label>
    </interactant>
    <organismsDiffer>false</organismsDiffer>
    <experiments>5</experiments>
</comment>
<comment type="interaction">
    <interactant intactId="EBI-375655">
        <id>P31016</id>
    </interactant>
    <interactant intactId="EBI-7713653">
        <id>Q8K430</id>
        <label>Klhl17</label>
    </interactant>
    <organismsDiffer>false</organismsDiffer>
    <experiments>2</experiments>
</comment>
<comment type="interaction">
    <interactant intactId="EBI-375655">
        <id>P31016</id>
    </interactant>
    <interactant intactId="EBI-877185">
        <id>Q460M5</id>
        <label>Lrfn2</label>
    </interactant>
    <organismsDiffer>false</organismsDiffer>
    <experiments>3</experiments>
</comment>
<comment type="interaction">
    <interactant intactId="EBI-375655">
        <id>P31016</id>
    </interactant>
    <interactant intactId="EBI-7798464">
        <id>P70587</id>
        <label>Lrrc7</label>
    </interactant>
    <organismsDiffer>false</organismsDiffer>
    <experiments>5</experiments>
</comment>
<comment type="interaction">
    <interactant intactId="EBI-375655">
        <id>P31016</id>
    </interactant>
    <interactant intactId="EBI-631571">
        <id>P34926</id>
        <label>Map1a</label>
    </interactant>
    <organismsDiffer>false</organismsDiffer>
    <experiments>16</experiments>
</comment>
<comment type="interaction">
    <interactant intactId="EBI-375655">
        <id>P31016</id>
    </interactant>
    <interactant intactId="EBI-8074312">
        <id>O54857</id>
        <label>Pten</label>
    </interactant>
    <organismsDiffer>false</organismsDiffer>
    <experiments>5</experiments>
</comment>
<comment type="interaction">
    <interactant intactId="EBI-375655">
        <id>P31016</id>
    </interactant>
    <interactant intactId="EBI-80909">
        <id>Q9WV48</id>
        <label>Shank1</label>
    </interactant>
    <organismsDiffer>false</organismsDiffer>
    <experiments>3</experiments>
</comment>
<comment type="interaction">
    <interactant intactId="EBI-375655">
        <id>P31016</id>
    </interactant>
    <interactant intactId="EBI-848783">
        <id>P28572</id>
        <label>Slc6a9</label>
    </interactant>
    <organismsDiffer>false</organismsDiffer>
    <experiments>2</experiments>
</comment>
<comment type="interaction">
    <interactant intactId="EBI-375655">
        <id>P31016</id>
    </interactant>
    <interactant intactId="EBI-848796">
        <id>P28572-2</id>
        <label>Slc6a9</label>
    </interactant>
    <organismsDiffer>false</organismsDiffer>
    <experiments>4</experiments>
</comment>
<comment type="interaction">
    <interactant intactId="EBI-375655">
        <id>P31016</id>
    </interactant>
    <interactant intactId="EBI-7665959">
        <id>P30937</id>
        <label>Sstr4</label>
    </interactant>
    <organismsDiffer>false</organismsDiffer>
    <experiments>3</experiments>
</comment>
<comment type="interaction">
    <interactant intactId="EBI-375655">
        <id>P31016</id>
    </interactant>
    <interactant intactId="EBI-2310349">
        <id>Q9QUH6</id>
        <label>Syngap1</label>
    </interactant>
    <organismsDiffer>false</organismsDiffer>
    <experiments>3</experiments>
</comment>
<comment type="interaction">
    <interactant intactId="EBI-375655">
        <id>P31016</id>
    </interactant>
    <interactant intactId="EBI-7361884">
        <id>Q8R4T5</id>
        <label>Tamalin</label>
    </interactant>
    <organismsDiffer>false</organismsDiffer>
    <experiments>3</experiments>
</comment>
<comment type="interaction">
    <interactant intactId="EBI-375655">
        <id>P31016</id>
    </interactant>
    <interactant intactId="EBI-6986245">
        <id>Q6IN36</id>
        <label>Wipf1</label>
    </interactant>
    <organismsDiffer>false</organismsDiffer>
    <experiments>5</experiments>
</comment>
<comment type="interaction">
    <interactant intactId="EBI-375655">
        <id>P31016</id>
    </interactant>
    <interactant intactId="EBI-991009">
        <id>P08588</id>
        <label>ADRB1</label>
    </interactant>
    <organismsDiffer>true</organismsDiffer>
    <experiments>2</experiments>
</comment>
<comment type="interaction">
    <interactant intactId="EBI-375655">
        <id>P31016</id>
    </interactant>
    <interactant intactId="EBI-946968">
        <id>Q9P021</id>
        <label>CRIPT</label>
    </interactant>
    <organismsDiffer>true</organismsDiffer>
    <experiments>2</experiments>
</comment>
<comment type="interaction">
    <interactant intactId="EBI-375655">
        <id>P31016</id>
    </interactant>
    <interactant intactId="EBI-357500">
        <id>Q12959-2</id>
        <label>DLG1</label>
    </interactant>
    <organismsDiffer>true</organismsDiffer>
    <experiments>9</experiments>
</comment>
<comment type="interaction">
    <interactant intactId="EBI-375655">
        <id>P31016</id>
    </interactant>
    <interactant intactId="EBI-7249937">
        <id>Q12879</id>
        <label>GRIN2A</label>
    </interactant>
    <organismsDiffer>true</organismsDiffer>
    <experiments>2</experiments>
</comment>
<comment type="interaction">
    <interactant intactId="EBI-375655">
        <id>P31016</id>
    </interactant>
    <interactant intactId="EBI-2256942">
        <id>Q13224</id>
        <label>GRIN2B</label>
    </interactant>
    <organismsDiffer>true</organismsDiffer>
    <experiments>2</experiments>
</comment>
<comment type="interaction">
    <interactant intactId="EBI-375655">
        <id>P31016</id>
    </interactant>
    <interactant intactId="EBI-8285963">
        <id>Q14957</id>
        <label>GRIN2C</label>
    </interactant>
    <organismsDiffer>true</organismsDiffer>
    <experiments>2</experiments>
</comment>
<comment type="interaction">
    <interactant intactId="EBI-375655">
        <id>P31016</id>
    </interactant>
    <interactant intactId="EBI-631235">
        <id>P22459</id>
        <label>KCNA4</label>
    </interactant>
    <organismsDiffer>true</organismsDiffer>
    <experiments>3</experiments>
</comment>
<comment type="interaction">
    <interactant intactId="EBI-375655">
        <id>P31016</id>
    </interactant>
    <interactant intactId="EBI-298680">
        <id>P05480</id>
        <label>Src</label>
    </interactant>
    <organismsDiffer>true</organismsDiffer>
    <experiments>9</experiments>
</comment>
<comment type="interaction">
    <interactant intactId="EBI-375655">
        <id>P31016</id>
    </interactant>
    <interactant intactId="EBI-1750708">
        <id>Q80Z96</id>
        <label>Vangl1</label>
    </interactant>
    <organismsDiffer>true</organismsDiffer>
    <experiments>4</experiments>
</comment>
<comment type="interaction">
    <interactant intactId="EBI-375655">
        <id>P31016</id>
    </interactant>
    <interactant intactId="EBI-1750744">
        <id>Q91ZD4</id>
        <label>Vangl2</label>
    </interactant>
    <organismsDiffer>true</organismsDiffer>
    <experiments>6</experiments>
</comment>
<comment type="subcellular location">
    <subcellularLocation>
        <location evidence="8 15 41 49">Cell membrane</location>
        <topology evidence="8">Lipid-anchor</topology>
        <orientation evidence="8">Cytoplasmic side</orientation>
    </subcellularLocation>
    <subcellularLocation>
        <location evidence="8 10 33 34 36 41">Postsynaptic density</location>
    </subcellularLocation>
    <subcellularLocation>
        <location evidence="10 11 15 27 28 30 34 40 41">Synapse</location>
    </subcellularLocation>
    <subcellularLocation>
        <location evidence="41">Cytoplasm</location>
    </subcellularLocation>
    <subcellularLocation>
        <location evidence="28 40">Cell projection</location>
        <location evidence="28 40">Axon</location>
    </subcellularLocation>
    <subcellularLocation>
        <location evidence="8 29 33 37">Cell projection</location>
        <location evidence="8 29 33 37">Dendritic spine</location>
    </subcellularLocation>
    <subcellularLocation>
        <location evidence="8 10">Cell projection</location>
        <location evidence="8 10">Dendrite</location>
    </subcellularLocation>
    <subcellularLocation>
        <location evidence="40">Presynapse</location>
    </subcellularLocation>
    <text evidence="27 40">High levels in postsynaptic density of neurons in the forebrain. Also in presynaptic region of inhibitory synapses formed by cerebellar basket cells on axon hillocks of Purkinje cells. Suppression of neuronal activity induces synaptic accumulation and clustering of DLG4 (PubMed:19596852).</text>
</comment>
<comment type="alternative products">
    <event type="alternative splicing"/>
    <isoform>
        <id>P31016-1</id>
        <name>1</name>
        <name>PSD95-alpha</name>
        <sequence type="displayed"/>
    </isoform>
    <isoform>
        <id>P31016-2</id>
        <name>2</name>
        <name>PSD95-beta</name>
        <sequence type="not described"/>
    </isoform>
</comment>
<comment type="tissue specificity">
    <text evidence="11 14 28 30 34 36">Expressed in brain (at protein level) (PubMed:12151521, PubMed:20962234, PubMed:27307232). Detected in juxtaparanodal zones in the central nervous system and at nerve terminal plexuses of basket cells in the cerebellum (PubMed:20089912). Expressed in cerebrum (PubMed:27307232). Expressed in hippocampal neurons (at protein level) (PubMed:11502259, PubMed:12151521, PubMed:27307232, PubMed:27756895). Isoform 1 and isoform 2: highly expressed in cerebellum, cortex, hippocampus, and corpus striatum (PubMed:12151521, PubMed:20962234).</text>
</comment>
<comment type="developmental stage">
    <text evidence="30">Expression gradually increases from late embryonic (E18) stage until adulthood.</text>
</comment>
<comment type="domain">
    <text evidence="1">The PDZ domain 3 mediates interaction with ADR1B.</text>
</comment>
<comment type="domain">
    <text evidence="1">The L27 domain near the N-terminus of isoform 2 is required for HGS/HRS-dependent targeting to postsynaptic density.</text>
</comment>
<comment type="PTM">
    <text evidence="8 19 27 34 38">Palmitoylated (PubMed:10629226, PubMed:27307232). Palmitoylation is required for targeting to postsynaptic density, plasma membrane and synapses (PubMed:10629226, PubMed:27307232). Palmitoylation by ZDHHC2 occurs when the synaptic activity decreases and induces DLG4 synaptic clustering (PubMed:19596852). Palmitoylation by ZDHHC15 regulates trafficking to the postsynaptic density and function in synaptogenesis (PubMed:15603741, PubMed:31189538). Palmitoylation may play a role in glutamate receptor GRIA1 synapse clustering (PubMed:27307232). Depalmitoylated by ABHD17A and ABHD17B and to a lesser extent by ABHD17C, ABHD12, ABHD13, LYPLA1 and LYPLA2 (PubMed:27307232). Undergoes rapid synaptic palmitoylation/depalmitoylation cycle during neuronal development which slows down in mature neurons (PubMed:27307232).</text>
</comment>
<comment type="PTM">
    <text evidence="15">Ubiquitinated by MDM2 in response to NMDA receptor activation, leading to proteasome-mediated degradation of DLG4 which is required for AMPA receptor endocytosis.</text>
</comment>
<comment type="similarity">
    <text evidence="48">Belongs to the MAGUK family.</text>
</comment>
<evidence type="ECO:0000250" key="1"/>
<evidence type="ECO:0000250" key="2">
    <source>
        <dbReference type="UniProtKB" id="P78352"/>
    </source>
</evidence>
<evidence type="ECO:0000250" key="3">
    <source>
        <dbReference type="UniProtKB" id="Q62108"/>
    </source>
</evidence>
<evidence type="ECO:0000255" key="4">
    <source>
        <dbReference type="PROSITE-ProRule" id="PRU00100"/>
    </source>
</evidence>
<evidence type="ECO:0000255" key="5">
    <source>
        <dbReference type="PROSITE-ProRule" id="PRU00143"/>
    </source>
</evidence>
<evidence type="ECO:0000255" key="6">
    <source>
        <dbReference type="PROSITE-ProRule" id="PRU00192"/>
    </source>
</evidence>
<evidence type="ECO:0000256" key="7">
    <source>
        <dbReference type="SAM" id="MobiDB-lite"/>
    </source>
</evidence>
<evidence type="ECO:0000269" key="8">
    <source>
    </source>
</evidence>
<evidence type="ECO:0000269" key="9">
    <source>
    </source>
</evidence>
<evidence type="ECO:0000269" key="10">
    <source>
    </source>
</evidence>
<evidence type="ECO:0000269" key="11">
    <source>
    </source>
</evidence>
<evidence type="ECO:0000269" key="12">
    <source>
    </source>
</evidence>
<evidence type="ECO:0000269" key="13">
    <source>
    </source>
</evidence>
<evidence type="ECO:0000269" key="14">
    <source>
    </source>
</evidence>
<evidence type="ECO:0000269" key="15">
    <source>
    </source>
</evidence>
<evidence type="ECO:0000269" key="16">
    <source>
    </source>
</evidence>
<evidence type="ECO:0000269" key="17">
    <source>
    </source>
</evidence>
<evidence type="ECO:0000269" key="18">
    <source>
    </source>
</evidence>
<evidence type="ECO:0000269" key="19">
    <source>
    </source>
</evidence>
<evidence type="ECO:0000269" key="20">
    <source>
    </source>
</evidence>
<evidence type="ECO:0000269" key="21">
    <source>
    </source>
</evidence>
<evidence type="ECO:0000269" key="22">
    <source>
    </source>
</evidence>
<evidence type="ECO:0000269" key="23">
    <source>
    </source>
</evidence>
<evidence type="ECO:0000269" key="24">
    <source>
    </source>
</evidence>
<evidence type="ECO:0000269" key="25">
    <source>
    </source>
</evidence>
<evidence type="ECO:0000269" key="26">
    <source>
    </source>
</evidence>
<evidence type="ECO:0000269" key="27">
    <source>
    </source>
</evidence>
<evidence type="ECO:0000269" key="28">
    <source>
    </source>
</evidence>
<evidence type="ECO:0000269" key="29">
    <source>
    </source>
</evidence>
<evidence type="ECO:0000269" key="30">
    <source>
    </source>
</evidence>
<evidence type="ECO:0000269" key="31">
    <source>
    </source>
</evidence>
<evidence type="ECO:0000269" key="32">
    <source>
    </source>
</evidence>
<evidence type="ECO:0000269" key="33">
    <source>
    </source>
</evidence>
<evidence type="ECO:0000269" key="34">
    <source>
    </source>
</evidence>
<evidence type="ECO:0000269" key="35">
    <source>
    </source>
</evidence>
<evidence type="ECO:0000269" key="36">
    <source>
    </source>
</evidence>
<evidence type="ECO:0000269" key="37">
    <source>
    </source>
</evidence>
<evidence type="ECO:0000269" key="38">
    <source>
    </source>
</evidence>
<evidence type="ECO:0000269" key="39">
    <source>
    </source>
</evidence>
<evidence type="ECO:0000269" key="40">
    <source>
    </source>
</evidence>
<evidence type="ECO:0000269" key="41">
    <source>
    </source>
</evidence>
<evidence type="ECO:0000269" key="42">
    <source>
    </source>
</evidence>
<evidence type="ECO:0000269" key="43">
    <source>
    </source>
</evidence>
<evidence type="ECO:0000269" key="44">
    <source>
    </source>
</evidence>
<evidence type="ECO:0000269" key="45">
    <source>
    </source>
</evidence>
<evidence type="ECO:0000303" key="46">
    <source>
    </source>
</evidence>
<evidence type="ECO:0000303" key="47">
    <source>
    </source>
</evidence>
<evidence type="ECO:0000305" key="48"/>
<evidence type="ECO:0000305" key="49">
    <source>
    </source>
</evidence>
<evidence type="ECO:0000312" key="50">
    <source>
        <dbReference type="RGD" id="68424"/>
    </source>
</evidence>
<evidence type="ECO:0007744" key="51">
    <source>
    </source>
</evidence>
<evidence type="ECO:0007829" key="52">
    <source>
        <dbReference type="PDB" id="1BE9"/>
    </source>
</evidence>
<evidence type="ECO:0007829" key="53">
    <source>
        <dbReference type="PDB" id="1IU0"/>
    </source>
</evidence>
<evidence type="ECO:0007829" key="54">
    <source>
        <dbReference type="PDB" id="1IU2"/>
    </source>
</evidence>
<evidence type="ECO:0007829" key="55">
    <source>
        <dbReference type="PDB" id="1JXM"/>
    </source>
</evidence>
<evidence type="ECO:0007829" key="56">
    <source>
        <dbReference type="PDB" id="1JXO"/>
    </source>
</evidence>
<evidence type="ECO:0007829" key="57">
    <source>
        <dbReference type="PDB" id="1KJW"/>
    </source>
</evidence>
<evidence type="ECO:0007829" key="58">
    <source>
        <dbReference type="PDB" id="1QLC"/>
    </source>
</evidence>
<evidence type="ECO:0007829" key="59">
    <source>
        <dbReference type="PDB" id="1TP5"/>
    </source>
</evidence>
<evidence type="ECO:0007829" key="60">
    <source>
        <dbReference type="PDB" id="2KA9"/>
    </source>
</evidence>
<evidence type="ECO:0007829" key="61">
    <source>
        <dbReference type="PDB" id="3GSL"/>
    </source>
</evidence>
<evidence type="ECO:0007829" key="62">
    <source>
        <dbReference type="PDB" id="5GNV"/>
    </source>
</evidence>
<evidence type="ECO:0007829" key="63">
    <source>
        <dbReference type="PDB" id="5HEY"/>
    </source>
</evidence>
<evidence type="ECO:0007829" key="64">
    <source>
        <dbReference type="PDB" id="5MZ7"/>
    </source>
</evidence>
<evidence type="ECO:0007829" key="65">
    <source>
        <dbReference type="PDB" id="7F7G"/>
    </source>
</evidence>
<organism>
    <name type="scientific">Rattus norvegicus</name>
    <name type="common">Rat</name>
    <dbReference type="NCBI Taxonomy" id="10116"/>
    <lineage>
        <taxon>Eukaryota</taxon>
        <taxon>Metazoa</taxon>
        <taxon>Chordata</taxon>
        <taxon>Craniata</taxon>
        <taxon>Vertebrata</taxon>
        <taxon>Euteleostomi</taxon>
        <taxon>Mammalia</taxon>
        <taxon>Eutheria</taxon>
        <taxon>Euarchontoglires</taxon>
        <taxon>Glires</taxon>
        <taxon>Rodentia</taxon>
        <taxon>Myomorpha</taxon>
        <taxon>Muroidea</taxon>
        <taxon>Muridae</taxon>
        <taxon>Murinae</taxon>
        <taxon>Rattus</taxon>
    </lineage>
</organism>
<gene>
    <name evidence="50" type="primary">Dlg4</name>
    <name type="synonym">Dlgh4</name>
    <name evidence="47" type="synonym">Psd95</name>
</gene>
<accession>P31016</accession>
<accession>P97631</accession>
<dbReference type="EMBL" id="M96853">
    <property type="protein sequence ID" value="AAA41971.1"/>
    <property type="molecule type" value="mRNA"/>
</dbReference>
<dbReference type="EMBL" id="X66474">
    <property type="protein sequence ID" value="CAA47103.1"/>
    <property type="molecule type" value="mRNA"/>
</dbReference>
<dbReference type="EMBL" id="U77090">
    <property type="protein sequence ID" value="AAB38270.1"/>
    <property type="molecule type" value="mRNA"/>
</dbReference>
<dbReference type="PIR" id="A45436">
    <property type="entry name" value="A45436"/>
</dbReference>
<dbReference type="PIR" id="JH0800">
    <property type="entry name" value="JH0800"/>
</dbReference>
<dbReference type="RefSeq" id="NP_062567.1">
    <molecule id="P31016-1"/>
    <property type="nucleotide sequence ID" value="NM_019621.2"/>
</dbReference>
<dbReference type="PDB" id="1BE9">
    <property type="method" value="X-ray"/>
    <property type="resolution" value="1.82 A"/>
    <property type="chains" value="A=302-430"/>
</dbReference>
<dbReference type="PDB" id="1BFE">
    <property type="method" value="X-ray"/>
    <property type="resolution" value="2.30 A"/>
    <property type="chains" value="A=302-402"/>
</dbReference>
<dbReference type="PDB" id="1IU0">
    <property type="method" value="NMR"/>
    <property type="chains" value="A=61-151"/>
</dbReference>
<dbReference type="PDB" id="1IU2">
    <property type="method" value="NMR"/>
    <property type="chains" value="A=61-151"/>
</dbReference>
<dbReference type="PDB" id="1JXM">
    <property type="method" value="X-ray"/>
    <property type="resolution" value="2.00 A"/>
    <property type="chains" value="A=430-724"/>
</dbReference>
<dbReference type="PDB" id="1JXO">
    <property type="method" value="X-ray"/>
    <property type="resolution" value="2.30 A"/>
    <property type="chains" value="A/B=430-724"/>
</dbReference>
<dbReference type="PDB" id="1KJW">
    <property type="method" value="X-ray"/>
    <property type="resolution" value="1.80 A"/>
    <property type="chains" value="A=430-724"/>
</dbReference>
<dbReference type="PDB" id="1QLC">
    <property type="method" value="NMR"/>
    <property type="chains" value="A=155-249"/>
</dbReference>
<dbReference type="PDB" id="1RGR">
    <property type="method" value="NMR"/>
    <property type="chains" value="A=62-154"/>
</dbReference>
<dbReference type="PDB" id="1TP3">
    <property type="method" value="X-ray"/>
    <property type="resolution" value="1.99 A"/>
    <property type="chains" value="A=302-402"/>
</dbReference>
<dbReference type="PDB" id="1TP5">
    <property type="method" value="X-ray"/>
    <property type="resolution" value="1.54 A"/>
    <property type="chains" value="A=302-402"/>
</dbReference>
<dbReference type="PDB" id="1TQ3">
    <property type="method" value="X-ray"/>
    <property type="resolution" value="1.89 A"/>
    <property type="chains" value="A=302-402"/>
</dbReference>
<dbReference type="PDB" id="2KA9">
    <property type="method" value="NMR"/>
    <property type="chains" value="A=61-249"/>
</dbReference>
<dbReference type="PDB" id="2MHO">
    <property type="method" value="NMR"/>
    <property type="chains" value="A=60-155"/>
</dbReference>
<dbReference type="PDB" id="2XKX">
    <property type="method" value="Other"/>
    <property type="resolution" value="22.90 A"/>
    <property type="chains" value="A/B=1-724"/>
</dbReference>
<dbReference type="PDB" id="3GSL">
    <property type="method" value="X-ray"/>
    <property type="resolution" value="2.05 A"/>
    <property type="chains" value="A/B=61-249"/>
</dbReference>
<dbReference type="PDB" id="3WP0">
    <property type="method" value="X-ray"/>
    <property type="resolution" value="2.04 A"/>
    <property type="chains" value="A=531-713"/>
</dbReference>
<dbReference type="PDB" id="3WP1">
    <property type="method" value="X-ray"/>
    <property type="resolution" value="2.80 A"/>
    <property type="chains" value="B=531-713"/>
</dbReference>
<dbReference type="PDB" id="5B64">
    <property type="method" value="X-ray"/>
    <property type="resolution" value="2.70 A"/>
    <property type="chains" value="A=531-713"/>
</dbReference>
<dbReference type="PDB" id="5D13">
    <property type="method" value="X-ray"/>
    <property type="resolution" value="2.15 A"/>
    <property type="chains" value="A/B/C/D=302-402"/>
</dbReference>
<dbReference type="PDB" id="5GNV">
    <property type="method" value="X-ray"/>
    <property type="resolution" value="2.60 A"/>
    <property type="chains" value="A=531-713"/>
</dbReference>
<dbReference type="PDB" id="5HDY">
    <property type="method" value="X-ray"/>
    <property type="resolution" value="1.80 A"/>
    <property type="chains" value="A=302-402"/>
</dbReference>
<dbReference type="PDB" id="5HEB">
    <property type="method" value="X-ray"/>
    <property type="resolution" value="1.65 A"/>
    <property type="chains" value="A=302-402"/>
</dbReference>
<dbReference type="PDB" id="5HED">
    <property type="method" value="X-ray"/>
    <property type="resolution" value="1.70 A"/>
    <property type="chains" value="A=302-402"/>
</dbReference>
<dbReference type="PDB" id="5HET">
    <property type="method" value="X-ray"/>
    <property type="resolution" value="2.00 A"/>
    <property type="chains" value="A=302-402"/>
</dbReference>
<dbReference type="PDB" id="5HEY">
    <property type="method" value="X-ray"/>
    <property type="resolution" value="1.50 A"/>
    <property type="chains" value="A=302-402"/>
</dbReference>
<dbReference type="PDB" id="5HF1">
    <property type="method" value="X-ray"/>
    <property type="resolution" value="1.75 A"/>
    <property type="chains" value="A=302-402"/>
</dbReference>
<dbReference type="PDB" id="5HF4">
    <property type="method" value="X-ray"/>
    <property type="resolution" value="1.75 A"/>
    <property type="chains" value="A=302-402"/>
</dbReference>
<dbReference type="PDB" id="5HFB">
    <property type="method" value="X-ray"/>
    <property type="resolution" value="1.62 A"/>
    <property type="chains" value="A=302-402"/>
</dbReference>
<dbReference type="PDB" id="5HFC">
    <property type="method" value="X-ray"/>
    <property type="resolution" value="1.85 A"/>
    <property type="chains" value="A=302-402"/>
</dbReference>
<dbReference type="PDB" id="5HFD">
    <property type="method" value="X-ray"/>
    <property type="resolution" value="1.60 A"/>
    <property type="chains" value="A=302-402"/>
</dbReference>
<dbReference type="PDB" id="5HFE">
    <property type="method" value="X-ray"/>
    <property type="resolution" value="1.80 A"/>
    <property type="chains" value="A=302-402"/>
</dbReference>
<dbReference type="PDB" id="5HFF">
    <property type="method" value="X-ray"/>
    <property type="resolution" value="1.75 A"/>
    <property type="chains" value="A=302-402"/>
</dbReference>
<dbReference type="PDB" id="5MZ7">
    <property type="method" value="X-ray"/>
    <property type="resolution" value="1.53 A"/>
    <property type="chains" value="A/B/C/D=303-402"/>
</dbReference>
<dbReference type="PDB" id="5W72">
    <property type="method" value="NMR"/>
    <property type="chains" value="A=301-402"/>
</dbReference>
<dbReference type="PDB" id="5YPO">
    <property type="method" value="X-ray"/>
    <property type="resolution" value="2.29 A"/>
    <property type="chains" value="A/B=531-713"/>
</dbReference>
<dbReference type="PDB" id="5YPR">
    <property type="method" value="X-ray"/>
    <property type="resolution" value="2.35 A"/>
    <property type="chains" value="A=426-721"/>
</dbReference>
<dbReference type="PDB" id="7CQF">
    <property type="method" value="X-ray"/>
    <property type="resolution" value="1.80 A"/>
    <property type="chains" value="A=309-422"/>
</dbReference>
<dbReference type="PDB" id="7F7G">
    <property type="method" value="X-ray"/>
    <property type="resolution" value="2.45 A"/>
    <property type="chains" value="A/B=531-713"/>
</dbReference>
<dbReference type="PDB" id="7F7I">
    <property type="method" value="X-ray"/>
    <property type="resolution" value="2.60 A"/>
    <property type="chains" value="A/B/C/D/E/F=531-713"/>
</dbReference>
<dbReference type="PDBsum" id="1BE9"/>
<dbReference type="PDBsum" id="1BFE"/>
<dbReference type="PDBsum" id="1IU0"/>
<dbReference type="PDBsum" id="1IU2"/>
<dbReference type="PDBsum" id="1JXM"/>
<dbReference type="PDBsum" id="1JXO"/>
<dbReference type="PDBsum" id="1KJW"/>
<dbReference type="PDBsum" id="1QLC"/>
<dbReference type="PDBsum" id="1RGR"/>
<dbReference type="PDBsum" id="1TP3"/>
<dbReference type="PDBsum" id="1TP5"/>
<dbReference type="PDBsum" id="1TQ3"/>
<dbReference type="PDBsum" id="2KA9"/>
<dbReference type="PDBsum" id="2MHO"/>
<dbReference type="PDBsum" id="2XKX"/>
<dbReference type="PDBsum" id="3GSL"/>
<dbReference type="PDBsum" id="3WP0"/>
<dbReference type="PDBsum" id="3WP1"/>
<dbReference type="PDBsum" id="5B64"/>
<dbReference type="PDBsum" id="5D13"/>
<dbReference type="PDBsum" id="5GNV"/>
<dbReference type="PDBsum" id="5HDY"/>
<dbReference type="PDBsum" id="5HEB"/>
<dbReference type="PDBsum" id="5HED"/>
<dbReference type="PDBsum" id="5HET"/>
<dbReference type="PDBsum" id="5HEY"/>
<dbReference type="PDBsum" id="5HF1"/>
<dbReference type="PDBsum" id="5HF4"/>
<dbReference type="PDBsum" id="5HFB"/>
<dbReference type="PDBsum" id="5HFC"/>
<dbReference type="PDBsum" id="5HFD"/>
<dbReference type="PDBsum" id="5HFE"/>
<dbReference type="PDBsum" id="5HFF"/>
<dbReference type="PDBsum" id="5MZ7"/>
<dbReference type="PDBsum" id="5W72"/>
<dbReference type="PDBsum" id="5YPO"/>
<dbReference type="PDBsum" id="5YPR"/>
<dbReference type="PDBsum" id="7CQF"/>
<dbReference type="PDBsum" id="7F7G"/>
<dbReference type="PDBsum" id="7F7I"/>
<dbReference type="BMRB" id="P31016"/>
<dbReference type="EMDB" id="EMD-1761"/>
<dbReference type="SMR" id="P31016"/>
<dbReference type="BioGRID" id="248135">
    <property type="interactions" value="37"/>
</dbReference>
<dbReference type="CORUM" id="P31016"/>
<dbReference type="DIP" id="DIP-29264N"/>
<dbReference type="ELM" id="P31016"/>
<dbReference type="FunCoup" id="P31016">
    <property type="interactions" value="2656"/>
</dbReference>
<dbReference type="IntAct" id="P31016">
    <property type="interactions" value="353"/>
</dbReference>
<dbReference type="MINT" id="P31016"/>
<dbReference type="STRING" id="10116.ENSRNOP00000074184"/>
<dbReference type="ChEMBL" id="CHEMBL3797015"/>
<dbReference type="iPTMnet" id="P31016"/>
<dbReference type="PhosphoSitePlus" id="P31016"/>
<dbReference type="SwissPalm" id="P31016"/>
<dbReference type="jPOST" id="P31016"/>
<dbReference type="PaxDb" id="10116-ENSRNOP00000059045"/>
<dbReference type="ABCD" id="P31016">
    <property type="antibodies" value="3 sequenced antibodies"/>
</dbReference>
<dbReference type="GeneID" id="29495"/>
<dbReference type="KEGG" id="rno:29495"/>
<dbReference type="UCSC" id="RGD:68424">
    <molecule id="P31016-1"/>
    <property type="organism name" value="rat"/>
</dbReference>
<dbReference type="AGR" id="RGD:68424"/>
<dbReference type="CTD" id="1742"/>
<dbReference type="RGD" id="68424">
    <property type="gene designation" value="Dlg4"/>
</dbReference>
<dbReference type="VEuPathDB" id="HostDB:ENSRNOG00000018526"/>
<dbReference type="eggNOG" id="KOG0708">
    <property type="taxonomic scope" value="Eukaryota"/>
</dbReference>
<dbReference type="HOGENOM" id="CLU_001715_4_2_1"/>
<dbReference type="InParanoid" id="P31016"/>
<dbReference type="OrthoDB" id="7180at9989"/>
<dbReference type="PhylomeDB" id="P31016"/>
<dbReference type="Reactome" id="R-RNO-399719">
    <property type="pathway name" value="Trafficking of AMPA receptors"/>
</dbReference>
<dbReference type="Reactome" id="R-RNO-438066">
    <property type="pathway name" value="Unblocking of NMDA receptors, glutamate binding and activation"/>
</dbReference>
<dbReference type="Reactome" id="R-RNO-451308">
    <property type="pathway name" value="Activation of Ca-permeable Kainate Receptor"/>
</dbReference>
<dbReference type="Reactome" id="R-RNO-5625900">
    <property type="pathway name" value="RHO GTPases activate CIT"/>
</dbReference>
<dbReference type="Reactome" id="R-RNO-5673001">
    <property type="pathway name" value="RAF/MAP kinase cascade"/>
</dbReference>
<dbReference type="Reactome" id="R-RNO-5682910">
    <property type="pathway name" value="LGI-ADAM interactions"/>
</dbReference>
<dbReference type="Reactome" id="R-RNO-6794361">
    <property type="pathway name" value="Neurexins and neuroligins"/>
</dbReference>
<dbReference type="Reactome" id="R-RNO-8849932">
    <property type="pathway name" value="Synaptic adhesion-like molecules"/>
</dbReference>
<dbReference type="CD-CODE" id="A7E9CBB4">
    <property type="entry name" value="Postsynaptic density"/>
</dbReference>
<dbReference type="EvolutionaryTrace" id="P31016"/>
<dbReference type="PRO" id="PR:P31016"/>
<dbReference type="Proteomes" id="UP000002494">
    <property type="component" value="Chromosome 10"/>
</dbReference>
<dbReference type="Bgee" id="ENSRNOG00000018526">
    <property type="expression patterns" value="Expressed in frontal cortex and 20 other cell types or tissues"/>
</dbReference>
<dbReference type="ExpressionAtlas" id="P31016">
    <property type="expression patterns" value="baseline and differential"/>
</dbReference>
<dbReference type="GO" id="GO:0032281">
    <property type="term" value="C:AMPA glutamate receptor complex"/>
    <property type="evidence" value="ECO:0000250"/>
    <property type="project" value="BHF-UCL"/>
</dbReference>
<dbReference type="GO" id="GO:0030054">
    <property type="term" value="C:cell junction"/>
    <property type="evidence" value="ECO:0000250"/>
    <property type="project" value="BHF-UCL"/>
</dbReference>
<dbReference type="GO" id="GO:0071944">
    <property type="term" value="C:cell periphery"/>
    <property type="evidence" value="ECO:0000266"/>
    <property type="project" value="RGD"/>
</dbReference>
<dbReference type="GO" id="GO:0005911">
    <property type="term" value="C:cell-cell junction"/>
    <property type="evidence" value="ECO:0000314"/>
    <property type="project" value="UniProtKB"/>
</dbReference>
<dbReference type="GO" id="GO:0044300">
    <property type="term" value="C:cerebellar mossy fiber"/>
    <property type="evidence" value="ECO:0000266"/>
    <property type="project" value="RGD"/>
</dbReference>
<dbReference type="GO" id="GO:0030863">
    <property type="term" value="C:cortical cytoskeleton"/>
    <property type="evidence" value="ECO:0000266"/>
    <property type="project" value="RGD"/>
</dbReference>
<dbReference type="GO" id="GO:0005737">
    <property type="term" value="C:cytoplasm"/>
    <property type="evidence" value="ECO:0000250"/>
    <property type="project" value="BHF-UCL"/>
</dbReference>
<dbReference type="GO" id="GO:0005829">
    <property type="term" value="C:cytosol"/>
    <property type="evidence" value="ECO:0000304"/>
    <property type="project" value="Reactome"/>
</dbReference>
<dbReference type="GO" id="GO:0030425">
    <property type="term" value="C:dendrite"/>
    <property type="evidence" value="ECO:0000314"/>
    <property type="project" value="UniProtKB"/>
</dbReference>
<dbReference type="GO" id="GO:0032839">
    <property type="term" value="C:dendrite cytoplasm"/>
    <property type="evidence" value="ECO:0000314"/>
    <property type="project" value="BHF-UCL"/>
</dbReference>
<dbReference type="GO" id="GO:0044307">
    <property type="term" value="C:dendritic branch"/>
    <property type="evidence" value="ECO:0000314"/>
    <property type="project" value="RGD"/>
</dbReference>
<dbReference type="GO" id="GO:0043197">
    <property type="term" value="C:dendritic spine"/>
    <property type="evidence" value="ECO:0000314"/>
    <property type="project" value="UniProtKB"/>
</dbReference>
<dbReference type="GO" id="GO:0005783">
    <property type="term" value="C:endoplasmic reticulum"/>
    <property type="evidence" value="ECO:0000250"/>
    <property type="project" value="BHF-UCL"/>
</dbReference>
<dbReference type="GO" id="GO:0060076">
    <property type="term" value="C:excitatory synapse"/>
    <property type="evidence" value="ECO:0000314"/>
    <property type="project" value="BHF-UCL"/>
</dbReference>
<dbReference type="GO" id="GO:0098978">
    <property type="term" value="C:glutamatergic synapse"/>
    <property type="evidence" value="ECO:0000314"/>
    <property type="project" value="SynGO"/>
</dbReference>
<dbReference type="GO" id="GO:0044224">
    <property type="term" value="C:juxtaparanode region of axon"/>
    <property type="evidence" value="ECO:0000314"/>
    <property type="project" value="UniProtKB"/>
</dbReference>
<dbReference type="GO" id="GO:0016020">
    <property type="term" value="C:membrane"/>
    <property type="evidence" value="ECO:0000314"/>
    <property type="project" value="UniProtKB"/>
</dbReference>
<dbReference type="GO" id="GO:0031594">
    <property type="term" value="C:neuromuscular junction"/>
    <property type="evidence" value="ECO:0000318"/>
    <property type="project" value="GO_Central"/>
</dbReference>
<dbReference type="GO" id="GO:0043005">
    <property type="term" value="C:neuron projection"/>
    <property type="evidence" value="ECO:0000318"/>
    <property type="project" value="GO_Central"/>
</dbReference>
<dbReference type="GO" id="GO:0044306">
    <property type="term" value="C:neuron projection terminus"/>
    <property type="evidence" value="ECO:0000250"/>
    <property type="project" value="BHF-UCL"/>
</dbReference>
<dbReference type="GO" id="GO:0044309">
    <property type="term" value="C:neuron spine"/>
    <property type="evidence" value="ECO:0000250"/>
    <property type="project" value="BHF-UCL"/>
</dbReference>
<dbReference type="GO" id="GO:0005886">
    <property type="term" value="C:plasma membrane"/>
    <property type="evidence" value="ECO:0000266"/>
    <property type="project" value="RGD"/>
</dbReference>
<dbReference type="GO" id="GO:0098794">
    <property type="term" value="C:postsynapse"/>
    <property type="evidence" value="ECO:0000266"/>
    <property type="project" value="RGD"/>
</dbReference>
<dbReference type="GO" id="GO:0014069">
    <property type="term" value="C:postsynaptic density"/>
    <property type="evidence" value="ECO:0000314"/>
    <property type="project" value="UniProtKB"/>
</dbReference>
<dbReference type="GO" id="GO:0098839">
    <property type="term" value="C:postsynaptic density membrane"/>
    <property type="evidence" value="ECO:0000314"/>
    <property type="project" value="SynGO"/>
</dbReference>
<dbReference type="GO" id="GO:0045211">
    <property type="term" value="C:postsynaptic membrane"/>
    <property type="evidence" value="ECO:0000314"/>
    <property type="project" value="UniProtKB"/>
</dbReference>
<dbReference type="GO" id="GO:1990635">
    <property type="term" value="C:proximal dendrite"/>
    <property type="evidence" value="ECO:0000314"/>
    <property type="project" value="RGD"/>
</dbReference>
<dbReference type="GO" id="GO:0045202">
    <property type="term" value="C:synapse"/>
    <property type="evidence" value="ECO:0000314"/>
    <property type="project" value="UniProtKB"/>
</dbReference>
<dbReference type="GO" id="GO:0097060">
    <property type="term" value="C:synaptic membrane"/>
    <property type="evidence" value="ECO:0000314"/>
    <property type="project" value="RGD"/>
</dbReference>
<dbReference type="GO" id="GO:0008021">
    <property type="term" value="C:synaptic vesicle"/>
    <property type="evidence" value="ECO:0000250"/>
    <property type="project" value="BHF-UCL"/>
</dbReference>
<dbReference type="GO" id="GO:0033130">
    <property type="term" value="F:acetylcholine receptor binding"/>
    <property type="evidence" value="ECO:0000314"/>
    <property type="project" value="RGD"/>
</dbReference>
<dbReference type="GO" id="GO:0031697">
    <property type="term" value="F:beta-1 adrenergic receptor binding"/>
    <property type="evidence" value="ECO:0000353"/>
    <property type="project" value="UniProtKB"/>
</dbReference>
<dbReference type="GO" id="GO:0031698">
    <property type="term" value="F:beta-2 adrenergic receptor binding"/>
    <property type="evidence" value="ECO:0000353"/>
    <property type="project" value="ARUK-UCL"/>
</dbReference>
<dbReference type="GO" id="GO:0031748">
    <property type="term" value="F:D1 dopamine receptor binding"/>
    <property type="evidence" value="ECO:0000353"/>
    <property type="project" value="RGD"/>
</dbReference>
<dbReference type="GO" id="GO:0005109">
    <property type="term" value="F:frizzled binding"/>
    <property type="evidence" value="ECO:0000353"/>
    <property type="project" value="ARUK-UCL"/>
</dbReference>
<dbReference type="GO" id="GO:0035254">
    <property type="term" value="F:glutamate receptor binding"/>
    <property type="evidence" value="ECO:0000353"/>
    <property type="project" value="BHF-UCL"/>
</dbReference>
<dbReference type="GO" id="GO:0035255">
    <property type="term" value="F:ionotropic glutamate receptor binding"/>
    <property type="evidence" value="ECO:0000353"/>
    <property type="project" value="RGD"/>
</dbReference>
<dbReference type="GO" id="GO:0019900">
    <property type="term" value="F:kinase binding"/>
    <property type="evidence" value="ECO:0000266"/>
    <property type="project" value="RGD"/>
</dbReference>
<dbReference type="GO" id="GO:0019894">
    <property type="term" value="F:kinesin binding"/>
    <property type="evidence" value="ECO:0000353"/>
    <property type="project" value="RGD"/>
</dbReference>
<dbReference type="GO" id="GO:0097109">
    <property type="term" value="F:neuroligin family protein binding"/>
    <property type="evidence" value="ECO:0000353"/>
    <property type="project" value="BHF-UCL"/>
</dbReference>
<dbReference type="GO" id="GO:0031812">
    <property type="term" value="F:P2Y1 nucleotide receptor binding"/>
    <property type="evidence" value="ECO:0000353"/>
    <property type="project" value="BHF-UCL"/>
</dbReference>
<dbReference type="GO" id="GO:0030165">
    <property type="term" value="F:PDZ domain binding"/>
    <property type="evidence" value="ECO:0000315"/>
    <property type="project" value="RGD"/>
</dbReference>
<dbReference type="GO" id="GO:0019901">
    <property type="term" value="F:protein kinase binding"/>
    <property type="evidence" value="ECO:0000353"/>
    <property type="project" value="RGD"/>
</dbReference>
<dbReference type="GO" id="GO:0019903">
    <property type="term" value="F:protein phosphatase binding"/>
    <property type="evidence" value="ECO:0000353"/>
    <property type="project" value="BHF-UCL"/>
</dbReference>
<dbReference type="GO" id="GO:0044877">
    <property type="term" value="F:protein-containing complex binding"/>
    <property type="evidence" value="ECO:0000353"/>
    <property type="project" value="RGD"/>
</dbReference>
<dbReference type="GO" id="GO:0097110">
    <property type="term" value="F:scaffold protein binding"/>
    <property type="evidence" value="ECO:0000353"/>
    <property type="project" value="SynGO-UCL"/>
</dbReference>
<dbReference type="GO" id="GO:0005102">
    <property type="term" value="F:signaling receptor binding"/>
    <property type="evidence" value="ECO:0000353"/>
    <property type="project" value="UniProtKB"/>
</dbReference>
<dbReference type="GO" id="GO:0098919">
    <property type="term" value="F:structural constituent of postsynaptic density"/>
    <property type="evidence" value="ECO:0000314"/>
    <property type="project" value="SynGO"/>
</dbReference>
<dbReference type="GO" id="GO:0097113">
    <property type="term" value="P:AMPA glutamate receptor clustering"/>
    <property type="evidence" value="ECO:0000315"/>
    <property type="project" value="BHF-UCL"/>
</dbReference>
<dbReference type="GO" id="GO:0098609">
    <property type="term" value="P:cell-cell adhesion"/>
    <property type="evidence" value="ECO:0000318"/>
    <property type="project" value="GO_Central"/>
</dbReference>
<dbReference type="GO" id="GO:0035865">
    <property type="term" value="P:cellular response to potassium ion"/>
    <property type="evidence" value="ECO:0000266"/>
    <property type="project" value="RGD"/>
</dbReference>
<dbReference type="GO" id="GO:0021987">
    <property type="term" value="P:cerebral cortex development"/>
    <property type="evidence" value="ECO:0000270"/>
    <property type="project" value="RGD"/>
</dbReference>
<dbReference type="GO" id="GO:0007268">
    <property type="term" value="P:chemical synaptic transmission"/>
    <property type="evidence" value="ECO:0000318"/>
    <property type="project" value="GO_Central"/>
</dbReference>
<dbReference type="GO" id="GO:0060997">
    <property type="term" value="P:dendritic spine morphogenesis"/>
    <property type="evidence" value="ECO:0000315"/>
    <property type="project" value="BHF-UCL"/>
</dbReference>
<dbReference type="GO" id="GO:0097061">
    <property type="term" value="P:dendritic spine organization"/>
    <property type="evidence" value="ECO:0000315"/>
    <property type="project" value="UniProtKB"/>
</dbReference>
<dbReference type="GO" id="GO:0045184">
    <property type="term" value="P:establishment of protein localization"/>
    <property type="evidence" value="ECO:0000250"/>
    <property type="project" value="BHF-UCL"/>
</dbReference>
<dbReference type="GO" id="GO:0035641">
    <property type="term" value="P:locomotory exploration behavior"/>
    <property type="evidence" value="ECO:0000250"/>
    <property type="project" value="BHF-UCL"/>
</dbReference>
<dbReference type="GO" id="GO:0002091">
    <property type="term" value="P:negative regulation of receptor internalization"/>
    <property type="evidence" value="ECO:0000314"/>
    <property type="project" value="UniProtKB"/>
</dbReference>
<dbReference type="GO" id="GO:0007399">
    <property type="term" value="P:nervous system development"/>
    <property type="evidence" value="ECO:0000318"/>
    <property type="project" value="GO_Central"/>
</dbReference>
<dbReference type="GO" id="GO:0050885">
    <property type="term" value="P:neuromuscular process controlling balance"/>
    <property type="evidence" value="ECO:0000250"/>
    <property type="project" value="BHF-UCL"/>
</dbReference>
<dbReference type="GO" id="GO:0045161">
    <property type="term" value="P:neuronal ion channel clustering"/>
    <property type="evidence" value="ECO:0000304"/>
    <property type="project" value="UniProtKB"/>
</dbReference>
<dbReference type="GO" id="GO:0099645">
    <property type="term" value="P:neurotransmitter receptor localization to postsynaptic specialization membrane"/>
    <property type="evidence" value="ECO:0000266"/>
    <property type="project" value="RGD"/>
</dbReference>
<dbReference type="GO" id="GO:0098989">
    <property type="term" value="P:NMDA selective glutamate receptor signaling pathway"/>
    <property type="evidence" value="ECO:0000314"/>
    <property type="project" value="BHF-UCL"/>
</dbReference>
<dbReference type="GO" id="GO:1904719">
    <property type="term" value="P:positive regulation of AMPA glutamate receptor clustering"/>
    <property type="evidence" value="ECO:0000315"/>
    <property type="project" value="UniProtKB"/>
</dbReference>
<dbReference type="GO" id="GO:0007204">
    <property type="term" value="P:positive regulation of cytosolic calcium ion concentration"/>
    <property type="evidence" value="ECO:0000315"/>
    <property type="project" value="RGD"/>
</dbReference>
<dbReference type="GO" id="GO:0050775">
    <property type="term" value="P:positive regulation of dendrite morphogenesis"/>
    <property type="evidence" value="ECO:0000315"/>
    <property type="project" value="RGD"/>
</dbReference>
<dbReference type="GO" id="GO:2000463">
    <property type="term" value="P:positive regulation of excitatory postsynaptic potential"/>
    <property type="evidence" value="ECO:0000314"/>
    <property type="project" value="BHF-UCL"/>
</dbReference>
<dbReference type="GO" id="GO:0150012">
    <property type="term" value="P:positive regulation of neuron projection arborization"/>
    <property type="evidence" value="ECO:0000316"/>
    <property type="project" value="ARUK-UCL"/>
</dbReference>
<dbReference type="GO" id="GO:0051965">
    <property type="term" value="P:positive regulation of synapse assembly"/>
    <property type="evidence" value="ECO:0000315"/>
    <property type="project" value="RGD"/>
</dbReference>
<dbReference type="GO" id="GO:0050806">
    <property type="term" value="P:positive regulation of synaptic transmission"/>
    <property type="evidence" value="ECO:0000314"/>
    <property type="project" value="BHF-UCL"/>
</dbReference>
<dbReference type="GO" id="GO:0035418">
    <property type="term" value="P:protein localization to synapse"/>
    <property type="evidence" value="ECO:0000315"/>
    <property type="project" value="UniProtKB"/>
</dbReference>
<dbReference type="GO" id="GO:0065003">
    <property type="term" value="P:protein-containing complex assembly"/>
    <property type="evidence" value="ECO:0000250"/>
    <property type="project" value="BHF-UCL"/>
</dbReference>
<dbReference type="GO" id="GO:0097120">
    <property type="term" value="P:receptor localization to synapse"/>
    <property type="evidence" value="ECO:0000315"/>
    <property type="project" value="BHF-UCL"/>
</dbReference>
<dbReference type="GO" id="GO:2000821">
    <property type="term" value="P:regulation of grooming behavior"/>
    <property type="evidence" value="ECO:0000250"/>
    <property type="project" value="BHF-UCL"/>
</dbReference>
<dbReference type="GO" id="GO:0048169">
    <property type="term" value="P:regulation of long-term neuronal synaptic plasticity"/>
    <property type="evidence" value="ECO:0000250"/>
    <property type="project" value="BHF-UCL"/>
</dbReference>
<dbReference type="GO" id="GO:0048168">
    <property type="term" value="P:regulation of neuronal synaptic plasticity"/>
    <property type="evidence" value="ECO:0000315"/>
    <property type="project" value="UniProtKB"/>
</dbReference>
<dbReference type="GO" id="GO:2000310">
    <property type="term" value="P:regulation of NMDA receptor activity"/>
    <property type="evidence" value="ECO:0000315"/>
    <property type="project" value="UniProtKB"/>
</dbReference>
<dbReference type="GO" id="GO:0099072">
    <property type="term" value="P:regulation of postsynaptic membrane neurotransmitter receptor levels"/>
    <property type="evidence" value="ECO:0000318"/>
    <property type="project" value="GO_Central"/>
</dbReference>
<dbReference type="GO" id="GO:0035176">
    <property type="term" value="P:social behavior"/>
    <property type="evidence" value="ECO:0000250"/>
    <property type="project" value="BHF-UCL"/>
</dbReference>
<dbReference type="GO" id="GO:0016188">
    <property type="term" value="P:synaptic vesicle maturation"/>
    <property type="evidence" value="ECO:0000250"/>
    <property type="project" value="BHF-UCL"/>
</dbReference>
<dbReference type="GO" id="GO:0071625">
    <property type="term" value="P:vocalization behavior"/>
    <property type="evidence" value="ECO:0000250"/>
    <property type="project" value="BHF-UCL"/>
</dbReference>
<dbReference type="CDD" id="cd00071">
    <property type="entry name" value="GMPK"/>
    <property type="match status" value="1"/>
</dbReference>
<dbReference type="CDD" id="cd06723">
    <property type="entry name" value="PDZ1_Dlg1-2-4-like"/>
    <property type="match status" value="1"/>
</dbReference>
<dbReference type="CDD" id="cd06724">
    <property type="entry name" value="PDZ2_Dlg1-2-4-like"/>
    <property type="match status" value="1"/>
</dbReference>
<dbReference type="CDD" id="cd06795">
    <property type="entry name" value="PDZ3_Dlg1-2-4-like"/>
    <property type="match status" value="1"/>
</dbReference>
<dbReference type="CDD" id="cd12030">
    <property type="entry name" value="SH3_DLG4"/>
    <property type="match status" value="1"/>
</dbReference>
<dbReference type="FunFam" id="3.40.50.300:FF:001402">
    <property type="entry name" value="Discs, large homolog 3 (Drosophila)"/>
    <property type="match status" value="1"/>
</dbReference>
<dbReference type="FunFam" id="2.30.42.10:FF:000001">
    <property type="entry name" value="Disks large homolog 1 isoform 2"/>
    <property type="match status" value="1"/>
</dbReference>
<dbReference type="FunFam" id="3.30.63.10:FF:000001">
    <property type="entry name" value="Disks large homolog 1 isoform 2"/>
    <property type="match status" value="1"/>
</dbReference>
<dbReference type="FunFam" id="2.30.42.10:FF:000091">
    <property type="entry name" value="disks large homolog 1 isoform X8"/>
    <property type="match status" value="1"/>
</dbReference>
<dbReference type="FunFam" id="2.30.42.10:FF:000002">
    <property type="entry name" value="Disks large homolog 4 isoform 2"/>
    <property type="match status" value="1"/>
</dbReference>
<dbReference type="FunFam" id="2.30.30.40:FF:000106">
    <property type="entry name" value="disks large homolog 4 isoform X2"/>
    <property type="match status" value="1"/>
</dbReference>
<dbReference type="Gene3D" id="2.30.42.10">
    <property type="match status" value="3"/>
</dbReference>
<dbReference type="Gene3D" id="3.30.63.10">
    <property type="entry name" value="Guanylate Kinase phosphate binding domain"/>
    <property type="match status" value="1"/>
</dbReference>
<dbReference type="Gene3D" id="3.40.50.300">
    <property type="entry name" value="P-loop containing nucleotide triphosphate hydrolases"/>
    <property type="match status" value="1"/>
</dbReference>
<dbReference type="Gene3D" id="2.30.30.40">
    <property type="entry name" value="SH3 Domains"/>
    <property type="match status" value="1"/>
</dbReference>
<dbReference type="InterPro" id="IPR019583">
    <property type="entry name" value="DLG1-4_PDZ_assoc"/>
</dbReference>
<dbReference type="InterPro" id="IPR016313">
    <property type="entry name" value="DLG1-like"/>
</dbReference>
<dbReference type="InterPro" id="IPR019590">
    <property type="entry name" value="DLG1_PEST_dom"/>
</dbReference>
<dbReference type="InterPro" id="IPR008145">
    <property type="entry name" value="GK/Ca_channel_bsu"/>
</dbReference>
<dbReference type="InterPro" id="IPR008144">
    <property type="entry name" value="Guanylate_kin-like_dom"/>
</dbReference>
<dbReference type="InterPro" id="IPR020590">
    <property type="entry name" value="Guanylate_kinase_CS"/>
</dbReference>
<dbReference type="InterPro" id="IPR027417">
    <property type="entry name" value="P-loop_NTPase"/>
</dbReference>
<dbReference type="InterPro" id="IPR001478">
    <property type="entry name" value="PDZ"/>
</dbReference>
<dbReference type="InterPro" id="IPR036034">
    <property type="entry name" value="PDZ_sf"/>
</dbReference>
<dbReference type="InterPro" id="IPR036028">
    <property type="entry name" value="SH3-like_dom_sf"/>
</dbReference>
<dbReference type="InterPro" id="IPR001452">
    <property type="entry name" value="SH3_domain"/>
</dbReference>
<dbReference type="InterPro" id="IPR050614">
    <property type="entry name" value="Synaptic_Scaffolding_LAP-MAGUK"/>
</dbReference>
<dbReference type="PANTHER" id="PTHR23119">
    <property type="entry name" value="DISCS LARGE"/>
    <property type="match status" value="1"/>
</dbReference>
<dbReference type="PANTHER" id="PTHR23119:SF33">
    <property type="entry name" value="DISKS LARGE HOMOLOG 4"/>
    <property type="match status" value="1"/>
</dbReference>
<dbReference type="Pfam" id="PF00625">
    <property type="entry name" value="Guanylate_kin"/>
    <property type="match status" value="1"/>
</dbReference>
<dbReference type="Pfam" id="PF10608">
    <property type="entry name" value="MAGUK_N_PEST"/>
    <property type="match status" value="1"/>
</dbReference>
<dbReference type="Pfam" id="PF00595">
    <property type="entry name" value="PDZ"/>
    <property type="match status" value="3"/>
</dbReference>
<dbReference type="Pfam" id="PF10600">
    <property type="entry name" value="PDZ_assoc"/>
    <property type="match status" value="1"/>
</dbReference>
<dbReference type="Pfam" id="PF00018">
    <property type="entry name" value="SH3_1"/>
    <property type="match status" value="1"/>
</dbReference>
<dbReference type="PIRSF" id="PIRSF001741">
    <property type="entry name" value="MAGUK_DLGH"/>
    <property type="match status" value="1"/>
</dbReference>
<dbReference type="SMART" id="SM00072">
    <property type="entry name" value="GuKc"/>
    <property type="match status" value="1"/>
</dbReference>
<dbReference type="SMART" id="SM01277">
    <property type="entry name" value="MAGUK_N_PEST"/>
    <property type="match status" value="1"/>
</dbReference>
<dbReference type="SMART" id="SM00228">
    <property type="entry name" value="PDZ"/>
    <property type="match status" value="3"/>
</dbReference>
<dbReference type="SMART" id="SM00326">
    <property type="entry name" value="SH3"/>
    <property type="match status" value="1"/>
</dbReference>
<dbReference type="SUPFAM" id="SSF52540">
    <property type="entry name" value="P-loop containing nucleoside triphosphate hydrolases"/>
    <property type="match status" value="1"/>
</dbReference>
<dbReference type="SUPFAM" id="SSF50156">
    <property type="entry name" value="PDZ domain-like"/>
    <property type="match status" value="3"/>
</dbReference>
<dbReference type="SUPFAM" id="SSF50044">
    <property type="entry name" value="SH3-domain"/>
    <property type="match status" value="1"/>
</dbReference>
<dbReference type="PROSITE" id="PS00856">
    <property type="entry name" value="GUANYLATE_KINASE_1"/>
    <property type="match status" value="1"/>
</dbReference>
<dbReference type="PROSITE" id="PS50052">
    <property type="entry name" value="GUANYLATE_KINASE_2"/>
    <property type="match status" value="1"/>
</dbReference>
<dbReference type="PROSITE" id="PS50106">
    <property type="entry name" value="PDZ"/>
    <property type="match status" value="3"/>
</dbReference>
<dbReference type="PROSITE" id="PS50002">
    <property type="entry name" value="SH3"/>
    <property type="match status" value="1"/>
</dbReference>
<feature type="chain" id="PRO_0000094562" description="Disks large homolog 4">
    <location>
        <begin position="1"/>
        <end position="724"/>
    </location>
</feature>
<feature type="domain" description="PDZ 1" evidence="5">
    <location>
        <begin position="65"/>
        <end position="151"/>
    </location>
</feature>
<feature type="domain" description="PDZ 2" evidence="5">
    <location>
        <begin position="160"/>
        <end position="246"/>
    </location>
</feature>
<feature type="domain" description="PDZ 3" evidence="5">
    <location>
        <begin position="313"/>
        <end position="393"/>
    </location>
</feature>
<feature type="domain" description="SH3" evidence="6">
    <location>
        <begin position="428"/>
        <end position="498"/>
    </location>
</feature>
<feature type="domain" description="Guanylate kinase-like" evidence="4">
    <location>
        <begin position="534"/>
        <end position="709"/>
    </location>
</feature>
<feature type="region of interest" description="Disordered" evidence="7">
    <location>
        <begin position="15"/>
        <end position="35"/>
    </location>
</feature>
<feature type="modified residue" description="Phosphoserine" evidence="3">
    <location>
        <position position="73"/>
    </location>
</feature>
<feature type="modified residue" description="Phosphoserine" evidence="3">
    <location>
        <position position="142"/>
    </location>
</feature>
<feature type="modified residue" description="Phosphotyrosine" evidence="51">
    <location>
        <position position="240"/>
    </location>
</feature>
<feature type="modified residue" description="Phosphoserine" evidence="51">
    <location>
        <position position="295"/>
    </location>
</feature>
<feature type="modified residue" description="Phosphoserine" evidence="3">
    <location>
        <position position="415"/>
    </location>
</feature>
<feature type="modified residue" description="Phosphoserine" evidence="51">
    <location>
        <position position="418"/>
    </location>
</feature>
<feature type="modified residue" description="Phosphothreonine" evidence="51">
    <location>
        <position position="420"/>
    </location>
</feature>
<feature type="modified residue" description="Phosphoserine" evidence="51">
    <location>
        <position position="422"/>
    </location>
</feature>
<feature type="modified residue" description="Phosphoserine" evidence="3">
    <location>
        <position position="425"/>
    </location>
</feature>
<feature type="modified residue" description="Phosphoserine" evidence="51">
    <location>
        <position position="449"/>
    </location>
</feature>
<feature type="modified residue" description="Phosphoserine" evidence="3">
    <location>
        <position position="480"/>
    </location>
</feature>
<feature type="modified residue" description="Phosphotyrosine" evidence="3">
    <location>
        <position position="580"/>
    </location>
</feature>
<feature type="modified residue" description="Phosphoserine" evidence="3">
    <location>
        <position position="606"/>
    </location>
</feature>
<feature type="modified residue" description="Phosphoserine" evidence="51">
    <location>
        <position position="654"/>
    </location>
</feature>
<feature type="modified residue" description="Phosphotyrosine" evidence="3">
    <location>
        <position position="715"/>
    </location>
</feature>
<feature type="lipid moiety-binding region" description="S-palmitoyl cysteine" evidence="8 34">
    <location>
        <position position="3"/>
    </location>
</feature>
<feature type="lipid moiety-binding region" description="S-palmitoyl cysteine" evidence="8 34">
    <location>
        <position position="5"/>
    </location>
</feature>
<feature type="mutagenesis site" description="Loss of palmitoylation and targeting to postsynaptic density." evidence="8 34">
    <original>C</original>
    <variation>S</variation>
    <location>
        <position position="3"/>
    </location>
</feature>
<feature type="mutagenesis site" description="Loss of palmitoylation and targeting to postsynaptic density." evidence="8 34">
    <original>C</original>
    <variation>S</variation>
    <location>
        <position position="5"/>
    </location>
</feature>
<feature type="mutagenesis site" description="Greatly reduced ubiquitination." evidence="15">
    <location>
        <begin position="13"/>
        <end position="24"/>
    </location>
</feature>
<feature type="sequence conflict" description="In Ref. 2; CAA47103." evidence="48" ref="2">
    <original>M</original>
    <variation>L</variation>
    <location>
        <position position="61"/>
    </location>
</feature>
<feature type="sequence conflict" description="In Ref. 2; CAA47103." evidence="48" ref="2">
    <original>S</original>
    <variation>T</variation>
    <location>
        <position position="78"/>
    </location>
</feature>
<feature type="sequence conflict" description="In Ref. 2; CAA47103." evidence="48" ref="2">
    <original>GVGNQH</original>
    <variation>ALGTSI</variation>
    <location>
        <begin position="177"/>
        <end position="182"/>
    </location>
</feature>
<feature type="sequence conflict" description="In Ref. 2; CAA47103." evidence="48" ref="2">
    <original>A</original>
    <variation>G</variation>
    <location>
        <position position="200"/>
    </location>
</feature>
<feature type="sequence conflict" description="In Ref. 2; CAA47103." evidence="48" ref="2">
    <original>S</original>
    <variation>T</variation>
    <location>
        <position position="254"/>
    </location>
</feature>
<feature type="sequence conflict" description="In Ref. 2; CAA47103." evidence="48" ref="2">
    <original>LGPTKDRANDDLLSEF</original>
    <variation>SLDPPKTVPTMIFSPSS</variation>
    <location>
        <begin position="540"/>
        <end position="555"/>
    </location>
</feature>
<feature type="sequence conflict" description="In Ref. 4; AAB38270." evidence="48" ref="4">
    <original>GKH</original>
    <variation>RDQ</variation>
    <location>
        <begin position="623"/>
        <end position="625"/>
    </location>
</feature>
<feature type="strand" evidence="61">
    <location>
        <begin position="61"/>
        <end position="69"/>
    </location>
</feature>
<feature type="strand" evidence="60">
    <location>
        <begin position="71"/>
        <end position="73"/>
    </location>
</feature>
<feature type="strand" evidence="61">
    <location>
        <begin position="74"/>
        <end position="80"/>
    </location>
</feature>
<feature type="strand" evidence="53">
    <location>
        <begin position="82"/>
        <end position="85"/>
    </location>
</feature>
<feature type="strand" evidence="53">
    <location>
        <begin position="88"/>
        <end position="91"/>
    </location>
</feature>
<feature type="strand" evidence="61">
    <location>
        <begin position="94"/>
        <end position="99"/>
    </location>
</feature>
<feature type="strand" evidence="60">
    <location>
        <begin position="101"/>
        <end position="103"/>
    </location>
</feature>
<feature type="helix" evidence="61">
    <location>
        <begin position="104"/>
        <end position="108"/>
    </location>
</feature>
<feature type="strand" evidence="61">
    <location>
        <begin position="116"/>
        <end position="120"/>
    </location>
</feature>
<feature type="helix" evidence="54">
    <location>
        <begin position="125"/>
        <end position="127"/>
    </location>
</feature>
<feature type="helix" evidence="61">
    <location>
        <begin position="130"/>
        <end position="138"/>
    </location>
</feature>
<feature type="strand" evidence="61">
    <location>
        <begin position="142"/>
        <end position="151"/>
    </location>
</feature>
<feature type="strand" evidence="61">
    <location>
        <begin position="156"/>
        <end position="166"/>
    </location>
</feature>
<feature type="strand" evidence="61">
    <location>
        <begin position="172"/>
        <end position="178"/>
    </location>
</feature>
<feature type="strand" evidence="61">
    <location>
        <begin position="189"/>
        <end position="194"/>
    </location>
</feature>
<feature type="helix" evidence="61">
    <location>
        <begin position="199"/>
        <end position="203"/>
    </location>
</feature>
<feature type="strand" evidence="61">
    <location>
        <begin position="211"/>
        <end position="215"/>
    </location>
</feature>
<feature type="strand" evidence="58">
    <location>
        <begin position="221"/>
        <end position="224"/>
    </location>
</feature>
<feature type="helix" evidence="61">
    <location>
        <begin position="225"/>
        <end position="233"/>
    </location>
</feature>
<feature type="strand" evidence="61">
    <location>
        <begin position="237"/>
        <end position="247"/>
    </location>
</feature>
<feature type="helix" evidence="59">
    <location>
        <begin position="302"/>
        <end position="304"/>
    </location>
</feature>
<feature type="strand" evidence="63">
    <location>
        <begin position="312"/>
        <end position="317"/>
    </location>
</feature>
<feature type="turn" evidence="64">
    <location>
        <begin position="319"/>
        <end position="321"/>
    </location>
</feature>
<feature type="strand" evidence="63">
    <location>
        <begin position="325"/>
        <end position="328"/>
    </location>
</feature>
<feature type="strand" evidence="63">
    <location>
        <begin position="331"/>
        <end position="334"/>
    </location>
</feature>
<feature type="strand" evidence="63">
    <location>
        <begin position="337"/>
        <end position="341"/>
    </location>
</feature>
<feature type="helix" evidence="63">
    <location>
        <begin position="348"/>
        <end position="350"/>
    </location>
</feature>
<feature type="strand" evidence="63">
    <location>
        <begin position="357"/>
        <end position="362"/>
    </location>
</feature>
<feature type="helix" evidence="63">
    <location>
        <begin position="372"/>
        <end position="380"/>
    </location>
</feature>
<feature type="strand" evidence="63">
    <location>
        <begin position="384"/>
        <end position="392"/>
    </location>
</feature>
<feature type="helix" evidence="63">
    <location>
        <begin position="394"/>
        <end position="398"/>
    </location>
</feature>
<feature type="strand" evidence="52">
    <location>
        <begin position="410"/>
        <end position="412"/>
    </location>
</feature>
<feature type="strand" evidence="52">
    <location>
        <begin position="418"/>
        <end position="420"/>
    </location>
</feature>
<feature type="strand" evidence="57">
    <location>
        <begin position="431"/>
        <end position="437"/>
    </location>
</feature>
<feature type="helix" evidence="57">
    <location>
        <begin position="441"/>
        <end position="445"/>
    </location>
</feature>
<feature type="strand" evidence="57">
    <location>
        <begin position="449"/>
        <end position="451"/>
    </location>
</feature>
<feature type="strand" evidence="57">
    <location>
        <begin position="459"/>
        <end position="464"/>
    </location>
</feature>
<feature type="strand" evidence="57">
    <location>
        <begin position="467"/>
        <end position="475"/>
    </location>
</feature>
<feature type="strand" evidence="57">
    <location>
        <begin position="486"/>
        <end position="489"/>
    </location>
</feature>
<feature type="helix" evidence="57">
    <location>
        <begin position="491"/>
        <end position="499"/>
    </location>
</feature>
<feature type="turn" evidence="56">
    <location>
        <begin position="504"/>
        <end position="507"/>
    </location>
</feature>
<feature type="strand" evidence="57">
    <location>
        <begin position="523"/>
        <end position="530"/>
    </location>
</feature>
<feature type="strand" evidence="57">
    <location>
        <begin position="537"/>
        <end position="541"/>
    </location>
</feature>
<feature type="helix" evidence="57">
    <location>
        <begin position="544"/>
        <end position="554"/>
    </location>
</feature>
<feature type="turn" evidence="57">
    <location>
        <begin position="556"/>
        <end position="558"/>
    </location>
</feature>
<feature type="strand" evidence="65">
    <location>
        <begin position="559"/>
        <end position="561"/>
    </location>
</feature>
<feature type="strand" evidence="65">
    <location>
        <begin position="565"/>
        <end position="568"/>
    </location>
</feature>
<feature type="turn" evidence="57">
    <location>
        <begin position="576"/>
        <end position="578"/>
    </location>
</feature>
<feature type="helix" evidence="57">
    <location>
        <begin position="586"/>
        <end position="594"/>
    </location>
</feature>
<feature type="turn" evidence="62">
    <location>
        <begin position="595"/>
        <end position="597"/>
    </location>
</feature>
<feature type="strand" evidence="57">
    <location>
        <begin position="598"/>
        <end position="604"/>
    </location>
</feature>
<feature type="strand" evidence="57">
    <location>
        <begin position="607"/>
        <end position="612"/>
    </location>
</feature>
<feature type="helix" evidence="57">
    <location>
        <begin position="613"/>
        <end position="621"/>
    </location>
</feature>
<feature type="strand" evidence="57">
    <location>
        <begin position="625"/>
        <end position="628"/>
    </location>
</feature>
<feature type="helix" evidence="57">
    <location>
        <begin position="634"/>
        <end position="640"/>
    </location>
</feature>
<feature type="strand" evidence="57">
    <location>
        <begin position="646"/>
        <end position="650"/>
    </location>
</feature>
<feature type="helix" evidence="57">
    <location>
        <begin position="655"/>
        <end position="661"/>
    </location>
</feature>
<feature type="strand" evidence="55">
    <location>
        <begin position="663"/>
        <end position="665"/>
    </location>
</feature>
<feature type="helix" evidence="57">
    <location>
        <begin position="667"/>
        <end position="684"/>
    </location>
</feature>
<feature type="helix" evidence="57">
    <location>
        <begin position="685"/>
        <end position="687"/>
    </location>
</feature>
<feature type="strand" evidence="57">
    <location>
        <begin position="689"/>
        <end position="692"/>
    </location>
</feature>
<feature type="helix" evidence="57">
    <location>
        <begin position="697"/>
        <end position="711"/>
    </location>
</feature>
<feature type="strand" evidence="57">
    <location>
        <begin position="714"/>
        <end position="719"/>
    </location>
</feature>
<reference key="1">
    <citation type="journal article" date="1992" name="Neuron">
        <title>The rat brain postsynaptic density fraction contains a homolog of the Drosophila discs-large tumor suppressor protein.</title>
        <authorList>
            <person name="Cho K.-O."/>
            <person name="Hunt C.A."/>
            <person name="Kennedy M.B."/>
        </authorList>
    </citation>
    <scope>NUCLEOTIDE SEQUENCE [MRNA]</scope>
    <source>
        <strain>Sprague-Dawley</strain>
        <tissue>Brain</tissue>
    </source>
</reference>
<reference key="2">
    <citation type="journal article" date="1993" name="J. Biol. Chem.">
        <title>SAP90, a rat presynaptic protein related to the product of the Drosophila tumor suppressor gene dlg-A.</title>
        <authorList>
            <person name="Kistner U."/>
            <person name="Wenzel B.M."/>
            <person name="Veh R.W."/>
            <person name="Cases-Langhoff C."/>
            <person name="Garner A.M."/>
            <person name="Appeltauer U."/>
            <person name="Voss B."/>
            <person name="Gundelfinger E.D."/>
            <person name="Garner C.C."/>
        </authorList>
    </citation>
    <scope>NUCLEOTIDE SEQUENCE [MRNA]</scope>
    <source>
        <strain>Sprague-Dawley</strain>
        <tissue>Brain</tissue>
    </source>
</reference>
<reference key="3">
    <citation type="submission" date="2007-04" db="UniProtKB">
        <authorList>
            <person name="Lubec G."/>
            <person name="Diao W."/>
        </authorList>
    </citation>
    <scope>PROTEIN SEQUENCE OF 113-126; 212-233; 300-312; 381-399 AND 598-617</scope>
    <scope>IDENTIFICATION BY MASS SPECTROMETRY</scope>
    <source>
        <strain>Sprague-Dawley</strain>
        <tissue>Hippocampus</tissue>
    </source>
</reference>
<reference key="4">
    <citation type="submission" date="1996-11" db="EMBL/GenBank/DDBJ databases">
        <authorList>
            <person name="Adams L.D."/>
            <person name="Werny I."/>
            <person name="Schwartz S.M."/>
        </authorList>
    </citation>
    <scope>NUCLEOTIDE SEQUENCE [MRNA] OF 566-625</scope>
    <source>
        <strain>Wistar Kyoto</strain>
        <tissue>Vascular smooth muscle</tissue>
    </source>
</reference>
<reference key="5">
    <citation type="journal article" date="1995" name="Science">
        <title>Domain interaction between NMDA receptor subunits and the postsynaptic density protein PSD-95.</title>
        <authorList>
            <person name="Kornau H.C."/>
            <person name="Schenker L.T."/>
            <person name="Kennedy M.B."/>
            <person name="Seeburg P.H."/>
        </authorList>
    </citation>
    <scope>INTERACTION WITH GRIN2A; GRIN2B; GRIN2C AND GRIN2D</scope>
</reference>
<reference key="6">
    <citation type="journal article" date="1996" name="J. Neurosci.">
        <title>Cloning and characterization of postsynaptic density 93, a nitric oxide synthase interacting protein.</title>
        <authorList>
            <person name="Brenman J.E."/>
            <person name="Christopherson K.S."/>
            <person name="Craven S.E."/>
            <person name="McGee A.W."/>
            <person name="Bredt D.S."/>
        </authorList>
    </citation>
    <scope>SUBCELLULAR LOCATION</scope>
</reference>
<reference key="7">
    <citation type="journal article" date="1997" name="J. Biol. Chem.">
        <title>SAPAPs. A family of PSD-95/SAP90-associated proteins localized at postsynaptic density.</title>
        <authorList>
            <person name="Takeuchi M."/>
            <person name="Hata Y."/>
            <person name="Hirao K."/>
            <person name="Toyoda A."/>
            <person name="Irie M."/>
            <person name="Takai Y."/>
        </authorList>
    </citation>
    <scope>INTERACTION WITH DLGAP1; DLGAP2; DLGAP3 AND DLGAP4</scope>
    <scope>SUBCELLULAR LOCATION</scope>
    <source>
        <tissue>Brain</tissue>
    </source>
</reference>
<reference key="8">
    <citation type="journal article" date="1998" name="J. Biol. Chem.">
        <title>BEGAIN (brain-enriched guanylate kinase-associated protein), a novel neuronal PSD-95/SAP90-binding protein.</title>
        <authorList>
            <person name="Deguchi M."/>
            <person name="Hata Y."/>
            <person name="Takeuchi M."/>
            <person name="Ide N."/>
            <person name="Hirao K."/>
            <person name="Yao I."/>
            <person name="Irie M."/>
            <person name="Toyoda A."/>
            <person name="Takai Y."/>
        </authorList>
    </citation>
    <scope>INTERACTION WITH BEGAIN AND DLGAP1</scope>
</reference>
<reference key="9">
    <citation type="journal article" date="1998" name="J. Neurosci.">
        <title>Localization of postsynaptic density-93 to dendritic microtubules and interaction with microtubule-associated protein 1A.</title>
        <authorList>
            <person name="Brenman J.E."/>
            <person name="Topinka J.R."/>
            <person name="Cooper E.C."/>
            <person name="McGee A.W."/>
            <person name="Rosen J."/>
            <person name="Milroy T."/>
            <person name="Ralston H.J."/>
            <person name="Bredt D.S."/>
        </authorList>
    </citation>
    <scope>INTERACTION WITH MAP1A</scope>
</reference>
<reference key="10">
    <citation type="journal article" date="1998" name="Neuron">
        <title>SynGAP: a synaptic RasGAP that associates with the PSD-95/SAP90 protein family.</title>
        <authorList>
            <person name="Kim J.H."/>
            <person name="Liao D."/>
            <person name="Lau L.-F."/>
            <person name="Huganir R.L."/>
        </authorList>
    </citation>
    <scope>INTERACTION WITH SYNGAP1</scope>
</reference>
<reference key="11">
    <citation type="journal article" date="1998" name="Neuron">
        <title>CRIPT, a novel postsynaptic protein that binds to the third PDZ domain of PSD-95/SAP90.</title>
        <authorList>
            <person name="Niethammer M."/>
            <person name="Valtschanoff J.G."/>
            <person name="Kapoor T.M."/>
            <person name="Allison D.W."/>
            <person name="Weinberg R.J."/>
            <person name="Craig A.M."/>
            <person name="Sheng M."/>
        </authorList>
    </citation>
    <scope>INTERACTION WITH CRIPT</scope>
</reference>
<reference key="12">
    <citation type="journal article" date="2000" name="J. Cell Biol.">
        <title>Dual palmitoylation of PSD-95 mediates its vesiculotubular sorting, postsynaptic targeting, and ion channel clustering.</title>
        <authorList>
            <person name="El-Husseini A.E."/>
            <person name="Craven S.E."/>
            <person name="Chetkovich D.M."/>
            <person name="Firestein B.L."/>
            <person name="Schnell E."/>
            <person name="Aoki C."/>
            <person name="Bredt D.S."/>
        </authorList>
    </citation>
    <scope>SUBCELLULAR LOCATION</scope>
    <scope>MUTAGENESIS OF CYS-3 AND CYS-5</scope>
    <scope>PALMITOYLATION AT CYS-3 AND CYS-5</scope>
</reference>
<reference key="13">
    <citation type="journal article" date="2001" name="J. Biol. Chem.">
        <title>Sema4c, a transmembrane semaphorin, interacts with a post-synaptic density protein, PSD-95.</title>
        <authorList>
            <person name="Inagaki S."/>
            <person name="Ohoka Y."/>
            <person name="Sugimoto H."/>
            <person name="Fujioka S."/>
            <person name="Amazaki M."/>
            <person name="Kurinami H."/>
            <person name="Miyazaki N."/>
            <person name="Tohyama M."/>
            <person name="Furuyama T."/>
        </authorList>
    </citation>
    <scope>INTERACTION WITH SEMA4C</scope>
</reference>
<reference key="14">
    <citation type="journal article" date="2001" name="J. Neurochem.">
        <title>Semaphorin4F interacts with the synapse-associated protein SAP90/PSD-95.</title>
        <authorList>
            <person name="Schultze W."/>
            <person name="Eulenburg V."/>
            <person name="Lessmann V."/>
            <person name="Herrmann L."/>
            <person name="Dittmar T."/>
            <person name="Gundelfinger E.D."/>
            <person name="Heumann R."/>
            <person name="Erdmann K.S."/>
        </authorList>
    </citation>
    <scope>INTERACTION WITH SEMA4F</scope>
    <scope>SUBCELLULAR LOCATION</scope>
</reference>
<reference key="15">
    <citation type="journal article" date="2001" name="Neuron">
        <title>Regulation of dendritic spine morphology by SPAR, a PSD-95-associated RapGAP.</title>
        <authorList>
            <person name="Pak D.T."/>
            <person name="Yang S."/>
            <person name="Rudolph-Correia S."/>
            <person name="Kim E."/>
            <person name="Sheng M."/>
        </authorList>
    </citation>
    <scope>INTERACTION WITH SIPA1L1</scope>
    <scope>SUBCELLULAR LOCATION</scope>
    <scope>TISSUE SPECIFICITY</scope>
</reference>
<reference key="16">
    <citation type="journal article" date="2002" name="J. Biol. Chem.">
        <title>Cell surface targeting and clustering interactions between heterologously expressed PSD-95 and the Shal voltage-gated potassium channel, Kv4.2.</title>
        <authorList>
            <person name="Wong W."/>
            <person name="Newell E.W."/>
            <person name="Jugloff D.G.M."/>
            <person name="Jones O.T."/>
            <person name="Schlichter L.C."/>
        </authorList>
    </citation>
    <scope>INTERACTION WITH KCND2</scope>
</reference>
<reference key="17">
    <citation type="journal article" date="2002" name="J. Neurosci.">
        <title>Postsynaptic targeting of alternative postsynaptic density-95 isoforms by distinct mechanisms.</title>
        <authorList>
            <person name="Chetkovich D.M."/>
            <person name="Bunn R.C."/>
            <person name="Kuo S.-H."/>
            <person name="Kawasaki Y."/>
            <person name="Kohwi M."/>
            <person name="Bredt D.S."/>
        </authorList>
    </citation>
    <scope>ALTERNATIVE SPLICING</scope>
    <scope>TISSUE SPECIFICITY</scope>
</reference>
<reference key="18">
    <citation type="journal article" date="2002" name="Am. J. Physiol.">
        <title>Inward rectifier K+ channel Kir2.3 is localized at the postsynaptic membrane of excitatory synapses.</title>
        <authorList>
            <person name="Inanobe A."/>
            <person name="Fujita A."/>
            <person name="Ito M."/>
            <person name="Tomoike H."/>
            <person name="Inageda K."/>
            <person name="Kurachi Y."/>
        </authorList>
    </citation>
    <scope>INTERACTION WITH KCNJ4</scope>
    <scope>SUBCELLULAR LOCATION</scope>
</reference>
<reference key="19">
    <citation type="journal article" date="2003" name="Neuron">
        <title>Ubiquitination regulates PSD-95 degradation and AMPA receptor surface expression.</title>
        <authorList>
            <person name="Colledge M."/>
            <person name="Snyder E.M."/>
            <person name="Crozier R.A."/>
            <person name="Soderling J.A."/>
            <person name="Jin Y."/>
            <person name="Langeberg L.K."/>
            <person name="Lu H."/>
            <person name="Bear M.F."/>
            <person name="Scott J.D."/>
        </authorList>
    </citation>
    <scope>SUBCELLULAR LOCATION</scope>
    <scope>UBIQUITINATION</scope>
    <scope>MUTAGENESIS OF 13-ARG--HIS-24</scope>
</reference>
<reference key="20">
    <citation type="journal article" date="2004" name="J. Biol. Chem.">
        <title>PSD-95 and Lin-7b interact with acid-sensing ion channel-3 and have opposite effects on H+- gated current.</title>
        <authorList>
            <person name="Hruska-Hageman A.M."/>
            <person name="Benson C.J."/>
            <person name="Leonard A.S."/>
            <person name="Price M.P."/>
            <person name="Welsh M.J."/>
        </authorList>
    </citation>
    <scope>INTERACTION WITH ASIC3</scope>
    <scope>FUNCTION</scope>
</reference>
<reference key="21">
    <citation type="journal article" date="2004" name="J. Cell Sci.">
        <title>A role for the PDZ-binding domain of the coxsackie B virus and adenovirus receptor (CAR) in cell adhesion and growth.</title>
        <authorList>
            <person name="Ashbourne-Excoffon K.J.D."/>
            <person name="Hruska-Hageman A.M."/>
            <person name="Klotz M."/>
            <person name="Traver G.L."/>
            <person name="Zabner J."/>
        </authorList>
    </citation>
    <scope>INTERACTION WITH CXADR</scope>
</reference>
<reference key="22">
    <citation type="journal article" date="2004" name="Neuron">
        <title>Identification of PSD-95 palmitoylating enzymes.</title>
        <authorList>
            <person name="Fukata M."/>
            <person name="Fukata Y."/>
            <person name="Adesnik H."/>
            <person name="Nicoll R.A."/>
            <person name="Bredt D.S."/>
        </authorList>
    </citation>
    <scope>PALMITOYLATION</scope>
</reference>
<reference key="23">
    <citation type="journal article" date="2004" name="Proc. Natl. Acad. Sci. U.S.A.">
        <title>A balance between excitatory and inhibitory synapses is controlled by PSD-95 and neuroligin.</title>
        <authorList>
            <person name="Prange O."/>
            <person name="Wong T.P."/>
            <person name="Gerrow K."/>
            <person name="Wang Y.T."/>
            <person name="El-Husseini A."/>
        </authorList>
    </citation>
    <scope>FUNCTION</scope>
</reference>
<reference key="24">
    <citation type="journal article" date="2005" name="Biochem. Biophys. Res. Commun.">
        <title>Proteomic analysis revealed a novel synaptic proline-rich membrane protein (PRR7) associated with PSD-95 and NMDA receptor.</title>
        <authorList>
            <person name="Murata Y."/>
            <person name="Doi T."/>
            <person name="Taniguchi H."/>
            <person name="Fujiyoshi Y."/>
        </authorList>
    </citation>
    <scope>INTERACTION WITH PRR7</scope>
</reference>
<reference key="25">
    <citation type="journal article" date="2005" name="Neuropharmacology">
        <title>Interactions between CAP70 and actinfilin are important for integrity of actin cytoskeleton structures in neurons.</title>
        <authorList>
            <person name="Chen Y."/>
            <person name="Li M."/>
        </authorList>
    </citation>
    <scope>INTERACTION WITH KLHL17</scope>
</reference>
<reference key="26">
    <citation type="journal article" date="2006" name="J. Neurosci.">
        <title>A novel family of adhesion-like molecules that interacts with the NMDA receptor.</title>
        <authorList>
            <person name="Wang C.Y."/>
            <person name="Chang K."/>
            <person name="Petralia R.S."/>
            <person name="Wang Y.X."/>
            <person name="Seabold G.K."/>
            <person name="Wenthold R.J."/>
        </authorList>
    </citation>
    <scope>INTERACTION WITH LRFN2</scope>
</reference>
<reference key="27">
    <citation type="journal article" date="2006" name="Neuron">
        <title>SALM synaptic cell adhesion-like molecules regulate the differentiation of excitatory synapses.</title>
        <authorList>
            <person name="Ko J."/>
            <person name="Kim S."/>
            <person name="Chung H.S."/>
            <person name="Kim K."/>
            <person name="Han K."/>
            <person name="Kim H."/>
            <person name="Jun H."/>
            <person name="Kaang B.-K."/>
            <person name="Kim E."/>
        </authorList>
    </citation>
    <scope>INTERACTION WITH LRFN1</scope>
</reference>
<reference key="28">
    <citation type="journal article" date="2006" name="Science">
        <title>Epilepsy-related ligand/receptor complex LGI1 and ADAM22 regulate synaptic transmission.</title>
        <authorList>
            <person name="Fukata Y."/>
            <person name="Adesnik H."/>
            <person name="Iwanaga T."/>
            <person name="Bredt D.S."/>
            <person name="Nicoll R.A."/>
            <person name="Fukata M."/>
        </authorList>
    </citation>
    <scope>INTERACTION WITH ADAM22 AND LGI1</scope>
</reference>
<reference key="29">
    <citation type="journal article" date="2007" name="Nat. Neurosci.">
        <title>Activity-dependent AIDA-1 nuclear signaling regulates nucleolar numbers and protein synthesis in neurons.</title>
        <authorList>
            <person name="Jordan B.A."/>
            <person name="Fernholz B.D."/>
            <person name="Khatri L."/>
            <person name="Ziff E.B."/>
        </authorList>
    </citation>
    <scope>INTERACTION WITH ANKS1B</scope>
</reference>
<reference key="30">
    <citation type="journal article" date="2008" name="J. Neurosci.">
        <title>Preso, a novel PSD-95-interacting FERM and PDZ domain protein that regulates dendritic spine morphogenesis.</title>
        <authorList>
            <person name="Lee H.W."/>
            <person name="Choi J."/>
            <person name="Shin H."/>
            <person name="Kim K."/>
            <person name="Yang J."/>
            <person name="Na M."/>
            <person name="Choi S.Y."/>
            <person name="Kang G.B."/>
            <person name="Eom S.H."/>
            <person name="Kim H."/>
            <person name="Kim E."/>
        </authorList>
    </citation>
    <scope>INTERACTION WITH FRMPD4</scope>
</reference>
<reference key="31">
    <citation type="journal article" date="2009" name="J. Cell Biol.">
        <title>Mobile DHHC palmitoylating enzyme mediates activity-sensitive synaptic targeting of PSD-95.</title>
        <authorList>
            <person name="Noritake J."/>
            <person name="Fukata Y."/>
            <person name="Iwanaga T."/>
            <person name="Hosomi N."/>
            <person name="Tsutsumi R."/>
            <person name="Matsuda N."/>
            <person name="Tani H."/>
            <person name="Iwanari H."/>
            <person name="Mochizuki Y."/>
            <person name="Kodama T."/>
            <person name="Matsuura Y."/>
            <person name="Bredt D.S."/>
            <person name="Hamakubo T."/>
            <person name="Fukata M."/>
        </authorList>
    </citation>
    <scope>FUNCTION</scope>
    <scope>SUBCELLULAR LOCATION</scope>
    <scope>PALMITOYLATION BY ZDHHC2</scope>
</reference>
<reference key="32">
    <citation type="journal article" date="2010" name="EMBO J.">
        <title>PTEN is recruited to the postsynaptic terminal for NMDA receptor-dependent long-term depression.</title>
        <authorList>
            <person name="Jurado S."/>
            <person name="Benoist M."/>
            <person name="Lario A."/>
            <person name="Knafo S."/>
            <person name="Petrok C.N."/>
            <person name="Esteban J.A."/>
        </authorList>
    </citation>
    <scope>INTERACTION WITH PTEN</scope>
    <scope>SUBCELLULAR LOCATION</scope>
    <scope>FUNCTION</scope>
</reference>
<reference key="33">
    <citation type="journal article" date="2010" name="J. Neurosci.">
        <title>Regulation of synaptic Rac1 activity, long-term potentiation maintenance, and learning and memory by BCR and ABR Rac GTPase-activating proteins.</title>
        <authorList>
            <person name="Oh D."/>
            <person name="Han S."/>
            <person name="Seo J."/>
            <person name="Lee J.R."/>
            <person name="Choi J."/>
            <person name="Groffen J."/>
            <person name="Kim K."/>
            <person name="Cho Y.S."/>
            <person name="Choi H.S."/>
            <person name="Shin H."/>
            <person name="Woo J."/>
            <person name="Won H."/>
            <person name="Park S.K."/>
            <person name="Kim S.Y."/>
            <person name="Jo J."/>
            <person name="Whitcomb D.J."/>
            <person name="Cho K."/>
            <person name="Kim H."/>
            <person name="Bae Y.C."/>
            <person name="Heisterkamp N."/>
            <person name="Choi S.Y."/>
            <person name="Kim E."/>
        </authorList>
    </citation>
    <scope>INTERACTION WITH ABR AND BCR</scope>
    <scope>TISSUE SPECIFICITY</scope>
    <scope>SUBCELLULAR LOCATION</scope>
    <scope>DEVELOPMENTAL STAGE</scope>
</reference>
<reference key="34">
    <citation type="journal article" date="2010" name="J. Neurosci.">
        <title>ADAM22, a Kv1 channel-interacting protein, recruits membrane-associated guanylate kinases to juxtaparanodes of myelinated axons.</title>
        <authorList>
            <person name="Ogawa Y."/>
            <person name="Oses-Prieto J."/>
            <person name="Kim M.Y."/>
            <person name="Horresh I."/>
            <person name="Peles E."/>
            <person name="Burlingame A.L."/>
            <person name="Trimmer J.S."/>
            <person name="Meijer D."/>
            <person name="Rasband M.N."/>
        </authorList>
    </citation>
    <scope>INTERACTION WITH ADAM22</scope>
    <scope>SUBCELLULAR LOCATION</scope>
    <scope>IDENTIFICATION BY MASS SPECTROMETRY</scope>
    <scope>TISSUE SPECIFICITY</scope>
</reference>
<reference key="35">
    <citation type="journal article" date="2011" name="EMBO J.">
        <title>DGKiota regulates presynaptic release during mGluR-dependent LTD.</title>
        <authorList>
            <person name="Yang J."/>
            <person name="Seo J."/>
            <person name="Nair R."/>
            <person name="Han S."/>
            <person name="Jang S."/>
            <person name="Kim K."/>
            <person name="Han K."/>
            <person name="Paik S.K."/>
            <person name="Choi J."/>
            <person name="Lee S."/>
            <person name="Bae Y.C."/>
            <person name="Topham M.K."/>
            <person name="Prescott S.M."/>
            <person name="Rhee J.S."/>
            <person name="Choi S.Y."/>
            <person name="Kim E."/>
        </authorList>
    </citation>
    <scope>INTERACTION WITH DGKI</scope>
</reference>
<reference key="36">
    <citation type="journal article" date="2012" name="Nat. Commun.">
        <title>Quantitative maps of protein phosphorylation sites across 14 different rat organs and tissues.</title>
        <authorList>
            <person name="Lundby A."/>
            <person name="Secher A."/>
            <person name="Lage K."/>
            <person name="Nordsborg N.B."/>
            <person name="Dmytriyev A."/>
            <person name="Lundby C."/>
            <person name="Olsen J.V."/>
        </authorList>
    </citation>
    <scope>PHOSPHORYLATION [LARGE SCALE ANALYSIS] AT TYR-240; SER-295; SER-418; THR-420; SER-422; SER-449 AND SER-654</scope>
    <scope>IDENTIFICATION BY MASS SPECTROMETRY [LARGE SCALE ANALYSIS]</scope>
</reference>
<reference key="37">
    <citation type="journal article" date="2013" name="J. Biol. Chem.">
        <title>Post-synaptic density-95 (PSD-95) binding capacity of G-protein-coupled receptor 30 (GPR30), an estrogen receptor that can be identified in hippocampal dendritic spines.</title>
        <authorList>
            <person name="Akama K.T."/>
            <person name="Thompson L.I."/>
            <person name="Milner T.A."/>
            <person name="McEwen B.S."/>
        </authorList>
    </citation>
    <scope>FUNCTION</scope>
    <scope>INTERACTION WITH GPER1 AND NOS1</scope>
</reference>
<reference key="38">
    <citation type="journal article" date="2015" name="Nat. Commun.">
        <title>Rabphilin 3A retains NMDA receptors at synaptic sites through interaction with GluN2A/PSD-95 complex.</title>
        <authorList>
            <person name="Stanic J."/>
            <person name="Carta M."/>
            <person name="Eberini I."/>
            <person name="Pelucchi S."/>
            <person name="Marcello E."/>
            <person name="Genazzani A.A."/>
            <person name="Racca C."/>
            <person name="Mulle C."/>
            <person name="Di Luca M."/>
            <person name="Gardoni F."/>
        </authorList>
    </citation>
    <scope>FUNCTION</scope>
    <scope>INTERACTION WITH GRIN2A AND RPH3A</scope>
    <scope>SUBCELLULAR LOCATION</scope>
</reference>
<reference key="39">
    <citation type="journal article" date="2016" name="EMBO J.">
        <title>Synaptonuclear messenger PRR7 inhibits c-Jun ubiquitination and regulates NMDA-mediated excitotoxicity.</title>
        <authorList>
            <person name="Kravchick D.O."/>
            <person name="Karpova A."/>
            <person name="Hrdinka M."/>
            <person name="Lopez-Rojas J."/>
            <person name="Iacobas S."/>
            <person name="Carbonell A.U."/>
            <person name="Iacobas D.A."/>
            <person name="Kreutz M.R."/>
            <person name="Jordan B.A."/>
        </authorList>
    </citation>
    <scope>IDENTIFICATION IN A COMPLEX WITH PRR7 AND GRIN1</scope>
    <scope>INTERACTION WITH PRR7</scope>
</reference>
<reference key="40">
    <citation type="journal article" date="2016" name="J. Neurosci.">
        <title>Identification of PSD-95 Depalmitoylating Enzymes.</title>
        <authorList>
            <person name="Yokoi N."/>
            <person name="Fukata Y."/>
            <person name="Sekiya A."/>
            <person name="Murakami T."/>
            <person name="Kobayashi K."/>
            <person name="Fukata M."/>
        </authorList>
    </citation>
    <scope>SUBCELLULAR LOCATION</scope>
    <scope>TISSUE SPECIFICITY</scope>
    <scope>PALMITOYLATION AT CYS-3 AND CYS-5</scope>
    <scope>MUTAGENESIS OF CYS-3 AND CYS-5</scope>
</reference>
<reference key="41">
    <citation type="journal article" date="2016" name="Sci. Rep.">
        <title>MPP2 is a postsynaptic MAGUK scaffold protein that links SynCAM1 cell adhesion molecules to core components of the postsynaptic density.</title>
        <authorList>
            <person name="Rademacher N."/>
            <person name="Schmerl B."/>
            <person name="Lardong J.A."/>
            <person name="Wahl M.C."/>
            <person name="Shoichet S.A."/>
        </authorList>
    </citation>
    <scope>SUBCELLULAR LOCATION</scope>
    <scope>TISSUE SPECIFICITY</scope>
    <scope>INTERACTION WITH CACNG2 AND MPP2</scope>
</reference>
<reference key="42">
    <citation type="journal article" date="2018" name="Cell Rep.">
        <title>Regulation of KIF1A-Driven Dense Core Vesicle Transport: Ca2+/CaM Controls DCV Binding and Liprin-alpha/TANC2 Recruits DCVs to Postsynaptic Sites.</title>
        <authorList>
            <person name="Stucchi R."/>
            <person name="Plucinska G."/>
            <person name="Hummel J.J.A."/>
            <person name="Zahavi E.E."/>
            <person name="Guerra San Juan I."/>
            <person name="Klykov O."/>
            <person name="Scheltema R.A."/>
            <person name="Altelaar A.F.M."/>
            <person name="Hoogenraad C.C."/>
        </authorList>
    </citation>
    <scope>SUBCELLULAR LOCATION</scope>
</reference>
<reference key="43">
    <citation type="journal article" date="2019" name="J. Cell Sci.">
        <title>Regulation of dendrite morphology and excitatory synapse formation by zDHHC15.</title>
        <authorList>
            <person name="Shah B.S."/>
            <person name="Shimell J.J."/>
            <person name="Bamji S.X."/>
        </authorList>
    </citation>
    <scope>PALMITOYLATION</scope>
</reference>
<reference key="44">
    <citation type="journal article" date="1996" name="Cell">
        <title>Crystal structures of a complexed and peptide-free membrane protein-binding domain: molecular basis of peptide recognition by PDZ.</title>
        <authorList>
            <person name="Doyle D.A."/>
            <person name="Lee A."/>
            <person name="Lewis J."/>
            <person name="Kim E."/>
            <person name="Sheng M."/>
            <person name="Mackinnon R."/>
        </authorList>
    </citation>
    <scope>X-RAY CRYSTALLOGRAPHY (1.82 ANGSTROMS) OF 302-402</scope>
</reference>
<reference key="45">
    <citation type="journal article" date="2000" name="J. Mol. Biol.">
        <title>Solution structure and backbone dynamics of the second PDZ domain of postsynaptic density-95.</title>
        <authorList>
            <person name="Tochio H."/>
            <person name="Hung F."/>
            <person name="Li M."/>
            <person name="Bredt D.S."/>
            <person name="Zhang M."/>
        </authorList>
    </citation>
    <scope>STRUCTURE BY NMR OF 155-246</scope>
    <scope>INTERACTION WITH NOS1 AND CAPON</scope>
</reference>
<reference key="46">
    <citation type="journal article" date="2001" name="Mol. Cell">
        <title>Structure of the SH3-guanylate kinase module from PSD-95 suggests a mechanism for regulated assembly of MAGUK scaffolding proteins.</title>
        <authorList>
            <person name="McGee A.W."/>
            <person name="Dakoji S.R."/>
            <person name="Olsen O."/>
            <person name="Bredt D.S."/>
            <person name="Lim W.A."/>
            <person name="Prehoda K.E."/>
        </authorList>
    </citation>
    <scope>X-RAY CRYSTALLOGRAPHY (1.8 ANGSTROMS) OF 430-724</scope>
</reference>
<reference key="47">
    <citation type="journal article" date="2001" name="Mol. Cell">
        <title>Structural characterization of the intramolecular interaction between the SH3 and guanylate kinase domains of PSD-95.</title>
        <authorList>
            <person name="Tavares G.A."/>
            <person name="Panepucci E.H."/>
            <person name="Brunger A.T."/>
        </authorList>
    </citation>
    <scope>X-RAY CRYSTALLOGRAPHY (2.0 ANGSTROMS) OF 430-724</scope>
</reference>
<reference key="48">
    <citation type="journal article" date="2004" name="Chem. Biol.">
        <title>Targeting specific PDZ domains of PSD-95; structural basis for enhanced affinity and enzymatic stability of a cyclic peptide.</title>
        <authorList>
            <person name="Piserchio A."/>
            <person name="Salinas G.D."/>
            <person name="Li T."/>
            <person name="Marshall J."/>
            <person name="Spaller M.R."/>
            <person name="Mierke D.F."/>
        </authorList>
    </citation>
    <scope>STRUCTURE BY NMR OF 62-154 IN COMPLEX WITH CYCLIC PEPTIDE</scope>
</reference>
<reference key="49">
    <citation type="journal article" date="2009" name="J. Am. Chem. Soc.">
        <title>Creating conformational entropy by increasing interdomain mobility in ligand binding regulation: a revisit to N-terminal tandem PDZ domains of PSD-95.</title>
        <authorList>
            <person name="Wang W."/>
            <person name="Weng J."/>
            <person name="Zhang X."/>
            <person name="Liu M."/>
            <person name="Zhang M."/>
        </authorList>
    </citation>
    <scope>STRUCTURE BY NMR OF 61-249 IN COMPLEX WITH PEPTIDE</scope>
</reference>
<keyword id="KW-0002">3D-structure</keyword>
<keyword id="KW-0025">Alternative splicing</keyword>
<keyword id="KW-1003">Cell membrane</keyword>
<keyword id="KW-0966">Cell projection</keyword>
<keyword id="KW-0963">Cytoplasm</keyword>
<keyword id="KW-0903">Direct protein sequencing</keyword>
<keyword id="KW-0449">Lipoprotein</keyword>
<keyword id="KW-0472">Membrane</keyword>
<keyword id="KW-0564">Palmitate</keyword>
<keyword id="KW-0597">Phosphoprotein</keyword>
<keyword id="KW-1185">Reference proteome</keyword>
<keyword id="KW-0677">Repeat</keyword>
<keyword id="KW-0728">SH3 domain</keyword>
<keyword id="KW-0770">Synapse</keyword>
<keyword id="KW-0832">Ubl conjugation</keyword>
<proteinExistence type="evidence at protein level"/>
<sequence>MDCLCIVTTKKYRYQDEDTPPLEHSPAHLPNQANSPPVIVNTDTLEAPGYELQVNGTEGEMEYEEITLERGNSGLGFSIAGGTDNPHIGDDPSIFITKIIPGGAAAQDGRLRVNDSILFVNEVDVREVTHSAAVEALKEAGSIVRLYVMRRKPPAEKVMEIKLIKGPKGLGFSIAGGVGNQHIPGDNSIYVTKIIEGGAAHKDGRLQIGDKILAVNSVGLEDVMHEDAVAALKNTYDVVYLKVAKPSNAYLSDSYAPPDITTSYSQHLDNEISHSSYLGTDYPTAMTPTSPRRYSPVAKDLLGEEDIPREPRRIVIHRGSTGLGFNIVGGEDGEGIFISFILAGGPADLSGELRKGDQILSVNGVDLRNASHEQAAIALKNAGQTVTIIAQYKPEEYSRFEAKIHDLREQLMNSSLGSGTASLRSNPKRGFYIRALFDYDKTKDCGFLSQALSFRFGDVLHVIDAGDEEWWQARRVHSDSETDDIGFIPSKRRVERREWSRLKAKDWGSSSGSQGREDSVLSYETVTQMEVHYARPIIILGPTKDRANDDLLSEFPDKFGSCVPHTTRPKREYEIDGRDYHFVSSREKMEKDIQAHKFIEAGQYNSHLYGTSVQSVREVAEQGKHCILDVSANAVRRLQAAHLHPIAIFIRPRSLENVLEINKRITEEQARKAFDRATKLEQEFTECFSAIVEGDSFEEIYHKVKRVIEDLSGPYIWVPARERL</sequence>
<protein>
    <recommendedName>
        <fullName>Disks large homolog 4</fullName>
    </recommendedName>
    <alternativeName>
        <fullName evidence="48">Postsynaptic density protein 95</fullName>
        <shortName evidence="46">PSD-95</shortName>
    </alternativeName>
    <alternativeName>
        <fullName>Synapse-associated protein 90</fullName>
        <shortName>SAP-90</shortName>
        <shortName>SAP90</shortName>
    </alternativeName>
</protein>